<gene>
    <name type="primary">Crebbp</name>
    <name type="synonym">Cbp</name>
</gene>
<sequence length="2441" mass="265494">MAENLLDGPPNPKRAKLSSPGFSANDNTDFGSLFDLENDLPDELIPNGELSLLNSGNLVPDAASKHKQLSELLRGGSGSSINPGIGNVSASSPVQQGLGGQAQGQPNSTNMASLGAMGKSPLNQGDSSTPNLPKQAASTSGPTPPASQALNPQAQKQVGLVTSSPATSQTGPGICMNANFNQTHPGLLNSNSGHSLMNQAQQGQAQVMNGSLGAAGRGRGAGMPYPAPAMQGATSSVLAETLTQVSPQMAGHAGLNTAQAGGMTKMGMTGTTSPFGQPFSQTGGQQMGATGVNPQLASKQSMVNSLPAFPTDIKNTSVTTVPNMSQLQTSVGIVPTQAIATGPTADPEKRKLIQQQLVLLLHAHKCQRREQANGEVRACSLPHCRTMKNVLNHMTHCQAGKACQVAHCASSRQIISHWKNCTRHDCPVCLPLKNASDKRNQQTILGSPASGIQNTIGSVGAGQQNATSLSNPNPIDPSSMQRAYAALGLPYMNQPQTQLQPQVPGQQPAQPPAHQQMRTLNALGNNPMSIPAGGITTDQQPPNLISESALPTSLGATNPLMNDGSNSGNIGSLSTIPTAAPPSSTGVRKGWHEHVTQDLRSHLVHKLVQAIFPTPDPAALKDRRMENLVAYAKKVEGDMYESANSRDEYYHLLAEKIYKIQKELEEKRRSRLHKQGILGNQPALPASGAQPPVIPPAQSVRPPNGPLPLPVNRMQVSQGMNSFNPMSLGNVQLPQAPMGPRAASPMNHSVQMNSMASVPGMAISPSRMPQPPNMMGTHANNIMAQAPTQNQFLPQNQFPSSSGAMSVNSVGMGQPAAQAGVSQGQVPGAALPNPLNMLAPQASQLPCPPVTQSPLHPTPPPASTAAGMPSLQHPTAPGMTPPQPAAPTQPSTPVSSGQTPTPTPGSVPSAAQTQSTPTVQAAAQAQVTPQPQTPVQPPSVATPQSSQQQPTPVHTQPPGTPLSQAAASIDNRVPTPSSVTSAETSSQQPGPDVPMLEMKTEVQTDDAEPEPTESKGEPRSEMMEEDLQGSSQVKEETDTTEQKSEPMEVEEKKPEVKVEAKEEEENSSNDTASQSTSPSQPRKKIFKPEELRQALMPTLEALYRQDPESLPFRQPVDPQLLGIPDYFDIVKNPMDLSTIKRKLDTGQYQEPWQYVDDVWLMFNNAWLYNRKTSRVYKFCSKLAEVFEQEIDPVMQSLGYCCGRKYEFSPQTLCCYGKQLCTIPRDAAYYSYQNRYHFCEKCFTEIQGENVTLGDDPSQPQTTISKDQFEKKKNDTLDPEPFVDCKECGRKMHQICVLHYDIIWPSGFVCDNCLKKTGRPRKENKFSAKRLQTTRLGNHLEDRVNKFLRRQNHPEAGEVFVRVVASSDKTVEVKPGMKSRFVDSGEMSESFPYRTKALFAFEEIDGVDVCFFGMHVQNTALIAPHQIQGRVYISYLDSIHFFRPRCLRTAVYHEILIGYLEYVKKLGYVTGHIWACPPSEGDDYIFHCHPPDQKIPKPKRLQEWYKKMLDKAFAERIINDYKDIFKQANEDRLTSAKELPYFEGDFWPNVLEESIKELEQEEEERKKEESTAASETPEGSQGDSKNAKKKNNKKTNKNKSSISRANKKKPSMPNVSNDLSQKLYATMEKHKEVFFVIHLHAGPVISTQPPIVDPDPLLSCDLMDGRDAFLTLARDKHWEFSSLRRSKWSTLCMLVELHTQGQDRFVYTCNECKHHVETRWHCTVCEDYDLCINCYNTKSHTHKMVKWGLGLDDEGSSQGEPQSKSPQESRRLSIQRCIQSLVHACQCRNANCSLPSCQKMKRVVQHTKGCKRKTNGGCPVCKQLIALCCYHAKHCQENKCPVPFCLNIKHKLRQQQIQHRLQQAQLMRRRMATMNTRNVPQQSLPSPTSAPPGTPTQQPSTPQTPQPPAQPQPSPVNMSPAGFPNVARTQPPTIVSAGKPTNQVPAPPPPAQPPPAAVEAARQIEREAQQQQHLYRANINNGMPPGRAGMGTPGSQMTPVGLNVPRPNQVSGPVMSSMPPGQWQQAPIPQQQPMPGMPRPVMSMQAQAAVAGPRMPNVQPPRSISPSALQDLLRTLKSPSSPQQQQQVLNILKSNPQLMAAFIKQRTAKYVANQPGMQPQPGLQSQPGMQPQPGMHQQPSLQNLNAMQAGVPRPGVPPPQPAMGGLNPQGQALNIMNPGHNPNMTNMNPQYREMVRRQLLQHQQQQQQQQQQQQQQQNSASLAGGMAGHSQFQQPQGPGGYAPAMQQQRMQQHLPIQGSSMGQMAAPMGQLGQMGQPGLGADSTPNIQQALQQRILQQQQMKQQIGSPGQPNPMSPQQHMLSGQPQASHLPGQQIATSLSNQVRSPAPVQSPRPQSQPPHSSPSPRIQPQPSPHHVSPQTGSPHPGLAVTMASSMDQGHLGNPEQSAMLPQLNTPNRSALSSELSLVGDTTGDTLEKFVEGL</sequence>
<feature type="initiator methionine" description="Removed" evidence="3">
    <location>
        <position position="1"/>
    </location>
</feature>
<feature type="chain" id="PRO_0000211191" description="Histone lysine acetyltransferase CREBBP">
    <location>
        <begin position="2"/>
        <end position="2441"/>
    </location>
</feature>
<feature type="domain" description="KIX" evidence="7">
    <location>
        <begin position="586"/>
        <end position="665"/>
    </location>
</feature>
<feature type="domain" description="Bromo" evidence="4">
    <location>
        <begin position="1086"/>
        <end position="1193"/>
    </location>
</feature>
<feature type="domain" description="CBP/p300-type HAT" evidence="8">
    <location>
        <begin position="1324"/>
        <end position="1701"/>
    </location>
</feature>
<feature type="zinc finger region" description="TAZ-type 1" evidence="5">
    <location>
        <begin position="346"/>
        <end position="432"/>
    </location>
</feature>
<feature type="zinc finger region" description="ZZ-type" evidence="6">
    <location>
        <begin position="1703"/>
        <end position="1751"/>
    </location>
</feature>
<feature type="zinc finger region" description="TAZ-type 2" evidence="5">
    <location>
        <begin position="1766"/>
        <end position="1847"/>
    </location>
</feature>
<feature type="region of interest" description="Disordered" evidence="9">
    <location>
        <begin position="1"/>
        <end position="29"/>
    </location>
</feature>
<feature type="region of interest" description="Disordered" evidence="9">
    <location>
        <begin position="73"/>
        <end position="168"/>
    </location>
</feature>
<feature type="region of interest" description="Interaction with SRCAP" evidence="1">
    <location>
        <begin position="226"/>
        <end position="409"/>
    </location>
</feature>
<feature type="region of interest" description="Disordered" evidence="9">
    <location>
        <begin position="261"/>
        <end position="292"/>
    </location>
</feature>
<feature type="region of interest" description="Disordered" evidence="9">
    <location>
        <begin position="792"/>
        <end position="1088"/>
    </location>
</feature>
<feature type="region of interest" description="Interaction with histone" evidence="3">
    <location>
        <begin position="1125"/>
        <end position="1171"/>
    </location>
</feature>
<feature type="region of interest" description="Interaction with ASF1A" evidence="3">
    <location>
        <begin position="1163"/>
        <end position="1181"/>
    </location>
</feature>
<feature type="region of interest" description="Interaction with histone" evidence="2">
    <location>
        <begin position="1434"/>
        <end position="1436"/>
    </location>
</feature>
<feature type="region of interest" description="Disordered" evidence="9">
    <location>
        <begin position="1557"/>
        <end position="1616"/>
    </location>
</feature>
<feature type="region of interest" description="Disordered" evidence="9">
    <location>
        <begin position="1875"/>
        <end position="1959"/>
    </location>
</feature>
<feature type="region of interest" description="Disordered" evidence="9">
    <location>
        <begin position="2112"/>
        <end position="2421"/>
    </location>
</feature>
<feature type="compositionally biased region" description="Polar residues" evidence="9">
    <location>
        <begin position="20"/>
        <end position="29"/>
    </location>
</feature>
<feature type="compositionally biased region" description="Low complexity" evidence="9">
    <location>
        <begin position="79"/>
        <end position="89"/>
    </location>
</feature>
<feature type="compositionally biased region" description="Polar residues" evidence="9">
    <location>
        <begin position="121"/>
        <end position="168"/>
    </location>
</feature>
<feature type="compositionally biased region" description="Low complexity" evidence="9">
    <location>
        <begin position="261"/>
        <end position="272"/>
    </location>
</feature>
<feature type="compositionally biased region" description="Polar residues" evidence="9">
    <location>
        <begin position="273"/>
        <end position="292"/>
    </location>
</feature>
<feature type="compositionally biased region" description="Polar residues" evidence="9">
    <location>
        <begin position="792"/>
        <end position="811"/>
    </location>
</feature>
<feature type="compositionally biased region" description="Pro residues" evidence="9">
    <location>
        <begin position="846"/>
        <end position="862"/>
    </location>
</feature>
<feature type="compositionally biased region" description="Polar residues" evidence="9">
    <location>
        <begin position="894"/>
        <end position="906"/>
    </location>
</feature>
<feature type="compositionally biased region" description="Low complexity" evidence="9">
    <location>
        <begin position="909"/>
        <end position="930"/>
    </location>
</feature>
<feature type="compositionally biased region" description="Low complexity" evidence="9">
    <location>
        <begin position="938"/>
        <end position="957"/>
    </location>
</feature>
<feature type="compositionally biased region" description="Polar residues" evidence="9">
    <location>
        <begin position="974"/>
        <end position="989"/>
    </location>
</feature>
<feature type="compositionally biased region" description="Basic and acidic residues" evidence="9">
    <location>
        <begin position="1012"/>
        <end position="1022"/>
    </location>
</feature>
<feature type="compositionally biased region" description="Basic and acidic residues" evidence="9">
    <location>
        <begin position="1033"/>
        <end position="1060"/>
    </location>
</feature>
<feature type="compositionally biased region" description="Polar residues" evidence="9">
    <location>
        <begin position="1068"/>
        <end position="1080"/>
    </location>
</feature>
<feature type="compositionally biased region" description="Basic and acidic residues" evidence="9">
    <location>
        <begin position="1557"/>
        <end position="1569"/>
    </location>
</feature>
<feature type="compositionally biased region" description="Basic residues" evidence="9">
    <location>
        <begin position="1586"/>
        <end position="1596"/>
    </location>
</feature>
<feature type="compositionally biased region" description="Pro residues" evidence="9">
    <location>
        <begin position="1901"/>
        <end position="1913"/>
    </location>
</feature>
<feature type="compositionally biased region" description="Pro residues" evidence="9">
    <location>
        <begin position="1944"/>
        <end position="1955"/>
    </location>
</feature>
<feature type="compositionally biased region" description="Low complexity" evidence="9">
    <location>
        <begin position="2113"/>
        <end position="2138"/>
    </location>
</feature>
<feature type="compositionally biased region" description="Polar residues" evidence="9">
    <location>
        <begin position="2167"/>
        <end position="2188"/>
    </location>
</feature>
<feature type="compositionally biased region" description="Low complexity" evidence="9">
    <location>
        <begin position="2197"/>
        <end position="2216"/>
    </location>
</feature>
<feature type="compositionally biased region" description="Low complexity" evidence="9">
    <location>
        <begin position="2260"/>
        <end position="2279"/>
    </location>
</feature>
<feature type="compositionally biased region" description="Low complexity" evidence="9">
    <location>
        <begin position="2286"/>
        <end position="2304"/>
    </location>
</feature>
<feature type="compositionally biased region" description="Polar residues" evidence="9">
    <location>
        <begin position="2314"/>
        <end position="2326"/>
    </location>
</feature>
<feature type="compositionally biased region" description="Polar residues" evidence="9">
    <location>
        <begin position="2333"/>
        <end position="2342"/>
    </location>
</feature>
<feature type="compositionally biased region" description="Pro residues" evidence="9">
    <location>
        <begin position="2348"/>
        <end position="2371"/>
    </location>
</feature>
<feature type="compositionally biased region" description="Polar residues" evidence="9">
    <location>
        <begin position="2410"/>
        <end position="2421"/>
    </location>
</feature>
<feature type="binding site" evidence="18">
    <location>
        <position position="362"/>
    </location>
    <ligand>
        <name>Zn(2+)</name>
        <dbReference type="ChEBI" id="CHEBI:29105"/>
        <label>1</label>
    </ligand>
</feature>
<feature type="binding site" evidence="18">
    <location>
        <position position="366"/>
    </location>
    <ligand>
        <name>Zn(2+)</name>
        <dbReference type="ChEBI" id="CHEBI:29105"/>
        <label>1</label>
    </ligand>
</feature>
<feature type="binding site" evidence="18">
    <location>
        <position position="379"/>
    </location>
    <ligand>
        <name>Zn(2+)</name>
        <dbReference type="ChEBI" id="CHEBI:29105"/>
        <label>1</label>
    </ligand>
</feature>
<feature type="binding site" evidence="18">
    <location>
        <position position="384"/>
    </location>
    <ligand>
        <name>Zn(2+)</name>
        <dbReference type="ChEBI" id="CHEBI:29105"/>
        <label>1</label>
    </ligand>
</feature>
<feature type="binding site" evidence="18">
    <location>
        <position position="393"/>
    </location>
    <ligand>
        <name>Zn(2+)</name>
        <dbReference type="ChEBI" id="CHEBI:29105"/>
        <label>2</label>
    </ligand>
</feature>
<feature type="binding site" evidence="18">
    <location>
        <position position="397"/>
    </location>
    <ligand>
        <name>Zn(2+)</name>
        <dbReference type="ChEBI" id="CHEBI:29105"/>
        <label>2</label>
    </ligand>
</feature>
<feature type="binding site" evidence="18">
    <location>
        <position position="403"/>
    </location>
    <ligand>
        <name>Zn(2+)</name>
        <dbReference type="ChEBI" id="CHEBI:29105"/>
        <label>2</label>
    </ligand>
</feature>
<feature type="binding site" evidence="18">
    <location>
        <position position="408"/>
    </location>
    <ligand>
        <name>Zn(2+)</name>
        <dbReference type="ChEBI" id="CHEBI:29105"/>
        <label>2</label>
    </ligand>
</feature>
<feature type="binding site" evidence="18">
    <location>
        <position position="417"/>
    </location>
    <ligand>
        <name>Zn(2+)</name>
        <dbReference type="ChEBI" id="CHEBI:29105"/>
        <label>3</label>
    </ligand>
</feature>
<feature type="binding site" evidence="18">
    <location>
        <position position="421"/>
    </location>
    <ligand>
        <name>Zn(2+)</name>
        <dbReference type="ChEBI" id="CHEBI:29105"/>
        <label>3</label>
    </ligand>
</feature>
<feature type="binding site" evidence="18">
    <location>
        <position position="426"/>
    </location>
    <ligand>
        <name>Zn(2+)</name>
        <dbReference type="ChEBI" id="CHEBI:29105"/>
        <label>3</label>
    </ligand>
</feature>
<feature type="binding site" evidence="18">
    <location>
        <position position="429"/>
    </location>
    <ligand>
        <name>Zn(2+)</name>
        <dbReference type="ChEBI" id="CHEBI:29105"/>
        <label>3</label>
    </ligand>
</feature>
<feature type="binding site" evidence="2">
    <location>
        <begin position="1435"/>
        <end position="1437"/>
    </location>
    <ligand>
        <name>acetyl-CoA</name>
        <dbReference type="ChEBI" id="CHEBI:57288"/>
    </ligand>
</feature>
<feature type="binding site" evidence="2">
    <location>
        <begin position="1447"/>
        <end position="1448"/>
    </location>
    <ligand>
        <name>acetyl-CoA</name>
        <dbReference type="ChEBI" id="CHEBI:57288"/>
    </ligand>
</feature>
<feature type="binding site" evidence="2">
    <location>
        <position position="1494"/>
    </location>
    <ligand>
        <name>acetyl-CoA</name>
        <dbReference type="ChEBI" id="CHEBI:57288"/>
    </ligand>
</feature>
<feature type="binding site" evidence="2">
    <location>
        <position position="1499"/>
    </location>
    <ligand>
        <name>acetyl-CoA</name>
        <dbReference type="ChEBI" id="CHEBI:57288"/>
    </ligand>
</feature>
<feature type="binding site" evidence="2">
    <location>
        <position position="1503"/>
    </location>
    <ligand>
        <name>acetyl-CoA</name>
        <dbReference type="ChEBI" id="CHEBI:57288"/>
    </ligand>
</feature>
<feature type="binding site" evidence="6">
    <location>
        <position position="1708"/>
    </location>
    <ligand>
        <name>Zn(2+)</name>
        <dbReference type="ChEBI" id="CHEBI:29105"/>
        <label>4</label>
    </ligand>
</feature>
<feature type="binding site" evidence="6">
    <location>
        <position position="1711"/>
    </location>
    <ligand>
        <name>Zn(2+)</name>
        <dbReference type="ChEBI" id="CHEBI:29105"/>
        <label>4</label>
    </ligand>
</feature>
<feature type="binding site" evidence="6">
    <location>
        <position position="1721"/>
    </location>
    <ligand>
        <name>Zn(2+)</name>
        <dbReference type="ChEBI" id="CHEBI:29105"/>
        <label>5</label>
    </ligand>
</feature>
<feature type="binding site" evidence="6">
    <location>
        <position position="1724"/>
    </location>
    <ligand>
        <name>Zn(2+)</name>
        <dbReference type="ChEBI" id="CHEBI:29105"/>
        <label>5</label>
    </ligand>
</feature>
<feature type="binding site" evidence="6">
    <location>
        <position position="1730"/>
    </location>
    <ligand>
        <name>Zn(2+)</name>
        <dbReference type="ChEBI" id="CHEBI:29105"/>
        <label>4</label>
    </ligand>
</feature>
<feature type="binding site" evidence="6">
    <location>
        <position position="1733"/>
    </location>
    <ligand>
        <name>Zn(2+)</name>
        <dbReference type="ChEBI" id="CHEBI:29105"/>
        <label>4</label>
    </ligand>
</feature>
<feature type="binding site" evidence="6">
    <location>
        <position position="1739"/>
    </location>
    <ligand>
        <name>Zn(2+)</name>
        <dbReference type="ChEBI" id="CHEBI:29105"/>
        <label>5</label>
    </ligand>
</feature>
<feature type="binding site" evidence="6">
    <location>
        <position position="1741"/>
    </location>
    <ligand>
        <name>Zn(2+)</name>
        <dbReference type="ChEBI" id="CHEBI:29105"/>
        <label>5</label>
    </ligand>
</feature>
<feature type="modified residue" description="N-acetylalanine" evidence="3">
    <location>
        <position position="2"/>
    </location>
</feature>
<feature type="modified residue" description="Phosphoserine" evidence="30">
    <location>
        <position position="120"/>
    </location>
</feature>
<feature type="modified residue" description="Omega-N-methylarginine" evidence="3">
    <location>
        <position position="219"/>
    </location>
</feature>
<feature type="modified residue" description="Asymmetric dimethylarginine" evidence="29">
    <location>
        <position position="600"/>
    </location>
</feature>
<feature type="modified residue" description="Asymmetric dimethylarginine" evidence="29">
    <location>
        <position position="624"/>
    </location>
</feature>
<feature type="modified residue" description="N6-acetyllysine" evidence="31">
    <location>
        <position position="656"/>
    </location>
</feature>
<feature type="modified residue" description="N6-acetyllysine" evidence="3">
    <location>
        <position position="1015"/>
    </location>
</feature>
<feature type="modified residue" description="Phosphoserine" evidence="3">
    <location>
        <position position="1031"/>
    </location>
</feature>
<feature type="modified residue" description="Phosphoserine" evidence="3">
    <location>
        <position position="1077"/>
    </location>
</feature>
<feature type="modified residue" description="N6-acetyllysine" evidence="31">
    <location>
        <position position="1217"/>
    </location>
</feature>
<feature type="modified residue" description="Phosphoserine; by IKKA" evidence="3">
    <location>
        <position position="1383"/>
    </location>
</feature>
<feature type="modified residue" description="Phosphoserine; by IKKA" evidence="3">
    <location>
        <position position="1387"/>
    </location>
</feature>
<feature type="modified residue" description="N6-acetyllysine" evidence="3">
    <location>
        <position position="1584"/>
    </location>
</feature>
<feature type="modified residue" description="N6-acetyllysine" evidence="3">
    <location>
        <position position="1592"/>
    </location>
</feature>
<feature type="modified residue" description="N6-acetyllysine" evidence="3">
    <location>
        <position position="1593"/>
    </location>
</feature>
<feature type="modified residue" description="N6-acetyllysine" evidence="31">
    <location>
        <position position="1596"/>
    </location>
</feature>
<feature type="modified residue" description="N6-acetyllysine" evidence="31">
    <location>
        <position position="1598"/>
    </location>
</feature>
<feature type="modified residue" description="N6-acetyllysine" evidence="3">
    <location>
        <position position="1742"/>
    </location>
</feature>
<feature type="modified residue" description="N6-acetyllysine" evidence="31">
    <location>
        <position position="1745"/>
    </location>
</feature>
<feature type="modified residue" description="Phosphoserine" evidence="3">
    <location>
        <position position="1764"/>
    </location>
</feature>
<feature type="modified residue" description="Phosphoserine" evidence="30">
    <location>
        <position position="2064"/>
    </location>
</feature>
<feature type="modified residue" description="Phosphoserine" evidence="3">
    <location>
        <position position="2077"/>
    </location>
</feature>
<feature type="modified residue" description="Phosphoserine" evidence="3">
    <location>
        <position position="2080"/>
    </location>
</feature>
<feature type="modified residue" description="Phosphoserine" evidence="30">
    <location>
        <position position="2350"/>
    </location>
</feature>
<feature type="cross-link" description="Glycyl lysine isopeptide (Lys-Gly) (interchain with G-Cter in SUMO1)" evidence="20">
    <location>
        <position position="999"/>
    </location>
</feature>
<feature type="cross-link" description="Glycyl lysine isopeptide (Lys-Gly) (interchain with G-Cter in SUMO1)" evidence="20">
    <location>
        <position position="1034"/>
    </location>
</feature>
<feature type="cross-link" description="Glycyl lysine isopeptide (Lys-Gly) (interchain with G-Cter in SUMO1)" evidence="20">
    <location>
        <position position="1057"/>
    </location>
</feature>
<feature type="mutagenesis site" description="Abolishes binding to CREB." evidence="25">
    <original>R</original>
    <variation>N</variation>
    <location>
        <position position="600"/>
    </location>
</feature>
<feature type="mutagenesis site" description="Enhanced transcriptional activity. No sumoylation, loss of recruitment of HDAC2 to DAAX and greatly enhanced transcriptional activity; when associated with R-1034 and R-1057." evidence="20">
    <original>K</original>
    <variation>R</variation>
    <location>
        <position position="999"/>
    </location>
</feature>
<feature type="mutagenesis site" description="No change in sumoylation." evidence="20">
    <original>K</original>
    <variation>R</variation>
    <location>
        <position position="1015"/>
    </location>
</feature>
<feature type="mutagenesis site" description="Enhanced transcriptional activity. No sumoylation, loss of recruitment of HDAC2 to DAAX and greatly enhanced transcriptional activity; when associated with R-999 and R-1057." evidence="20">
    <original>K</original>
    <variation>R</variation>
    <location>
        <position position="1034"/>
    </location>
</feature>
<feature type="mutagenesis site" description="No change in sumoylation." evidence="20">
    <original>K</original>
    <variation>R</variation>
    <location>
        <position position="1043"/>
    </location>
</feature>
<feature type="mutagenesis site" description="No change in sumoylation." evidence="20">
    <original>K</original>
    <variation>R</variation>
    <location>
        <position position="1053"/>
    </location>
</feature>
<feature type="mutagenesis site" description="Enhanced transcriptional activity. No sumoylation, loss of recruitment of HDAC2 to DAAX and greatly enhanced transcriptional activity; when associated with R-999 and R-1034." evidence="20">
    <original>K</original>
    <variation>R</variation>
    <location>
        <position position="1057"/>
    </location>
</feature>
<feature type="mutagenesis site" description="No change in sumoylation." evidence="20">
    <original>K</original>
    <variation>R</variation>
    <location>
        <position position="1061"/>
    </location>
</feature>
<feature type="mutagenesis site" description="No change in sumoylation." evidence="20">
    <original>K</original>
    <variation>R</variation>
    <location>
        <position position="1087"/>
    </location>
</feature>
<feature type="mutagenesis site" description="Abolishes histone acetyltransferase activity." evidence="10">
    <original>LC</original>
    <variation>KL</variation>
    <location>
        <begin position="1690"/>
        <end position="1691"/>
    </location>
</feature>
<feature type="sequence conflict" description="In Ref. 1; AAB28651." evidence="28" ref="1">
    <original>G</original>
    <variation>P</variation>
    <location>
        <position position="400"/>
    </location>
</feature>
<feature type="sequence conflict" description="In Ref. 1; AAB28651." evidence="28" ref="1">
    <original>I</original>
    <variation>V</variation>
    <location>
        <position position="530"/>
    </location>
</feature>
<feature type="sequence conflict" description="In Ref. 1; AAB28651." evidence="28" ref="1">
    <original>S</original>
    <variation>T</variation>
    <location>
        <position position="670"/>
    </location>
</feature>
<feature type="sequence conflict" description="In Ref. 1; AAB28651." evidence="28" ref="1">
    <original>V</original>
    <variation>E</variation>
    <location>
        <position position="826"/>
    </location>
</feature>
<feature type="sequence conflict" description="In Ref. 1; AAB28651." evidence="28" ref="1">
    <original>S</original>
    <variation>T</variation>
    <location>
        <position position="978"/>
    </location>
</feature>
<feature type="sequence conflict" description="In Ref. 1; AAB28651." evidence="28" ref="1">
    <original>W</original>
    <variation>R</variation>
    <location>
        <position position="1159"/>
    </location>
</feature>
<feature type="sequence conflict" description="In Ref. 1; AAB28651." evidence="28" ref="1">
    <original>E</original>
    <variation>G</variation>
    <location>
        <position position="1239"/>
    </location>
</feature>
<feature type="sequence conflict" description="In Ref. 1; AAB28651." evidence="28" ref="1">
    <original>N</original>
    <variation>D</variation>
    <location>
        <position position="1417"/>
    </location>
</feature>
<feature type="sequence conflict" description="In Ref. 1; AAB28651." evidence="28" ref="1">
    <original>R</original>
    <variation>C</variation>
    <location>
        <position position="1429"/>
    </location>
</feature>
<feature type="sequence conflict" description="In Ref. 1; AAB28651." evidence="28" ref="1">
    <original>G</original>
    <variation>V</variation>
    <location>
        <position position="1466"/>
    </location>
</feature>
<feature type="sequence conflict" description="In Ref. 1; AAB28651." evidence="28" ref="1">
    <original>G</original>
    <variation>A</variation>
    <location>
        <position position="1470"/>
    </location>
</feature>
<feature type="sequence conflict" description="In Ref. 1; AAB28651." evidence="28" ref="1">
    <original>KL</original>
    <variation>NV</variation>
    <location>
        <begin position="1850"/>
        <end position="1851"/>
    </location>
</feature>
<feature type="sequence conflict" description="In Ref. 1; AAB28651." evidence="28" ref="1">
    <original>R</original>
    <variation>C</variation>
    <location>
        <position position="1859"/>
    </location>
</feature>
<feature type="sequence conflict" description="In Ref. 1; AAB28651." evidence="28" ref="1">
    <original>A</original>
    <variation>D</variation>
    <location>
        <position position="1987"/>
    </location>
</feature>
<feature type="sequence conflict" description="In Ref. 1; AAB28651." evidence="28" ref="1">
    <original>P</original>
    <variation>N</variation>
    <location>
        <position position="2060"/>
    </location>
</feature>
<feature type="sequence conflict" description="In Ref. 1; AAB28651." evidence="28" ref="1">
    <original>S</original>
    <variation>T</variation>
    <location>
        <position position="2381"/>
    </location>
</feature>
<feature type="turn" evidence="39">
    <location>
        <begin position="343"/>
        <end position="345"/>
    </location>
</feature>
<feature type="helix" evidence="44">
    <location>
        <begin position="347"/>
        <end position="373"/>
    </location>
</feature>
<feature type="strand" evidence="38">
    <location>
        <begin position="374"/>
        <end position="376"/>
    </location>
</feature>
<feature type="helix" evidence="44">
    <location>
        <begin position="384"/>
        <end position="394"/>
    </location>
</feature>
<feature type="helix" evidence="44">
    <location>
        <begin position="400"/>
        <end position="402"/>
    </location>
</feature>
<feature type="helix" evidence="44">
    <location>
        <begin position="408"/>
        <end position="420"/>
    </location>
</feature>
<feature type="turn" evidence="40">
    <location>
        <begin position="423"/>
        <end position="425"/>
    </location>
</feature>
<feature type="turn" evidence="44">
    <location>
        <begin position="427"/>
        <end position="429"/>
    </location>
</feature>
<feature type="helix" evidence="44">
    <location>
        <begin position="430"/>
        <end position="433"/>
    </location>
</feature>
<feature type="helix" evidence="35">
    <location>
        <begin position="436"/>
        <end position="438"/>
    </location>
</feature>
<feature type="helix" evidence="41">
    <location>
        <begin position="590"/>
        <end position="594"/>
    </location>
</feature>
<feature type="helix" evidence="41">
    <location>
        <begin position="597"/>
        <end position="611"/>
    </location>
</feature>
<feature type="turn" evidence="41">
    <location>
        <begin position="617"/>
        <end position="619"/>
    </location>
</feature>
<feature type="helix" evidence="41">
    <location>
        <begin position="622"/>
        <end position="642"/>
    </location>
</feature>
<feature type="helix" evidence="41">
    <location>
        <begin position="646"/>
        <end position="664"/>
    </location>
</feature>
<feature type="turn" evidence="36">
    <location>
        <begin position="667"/>
        <end position="671"/>
    </location>
</feature>
<feature type="helix" evidence="43">
    <location>
        <begin position="1088"/>
        <end position="1103"/>
    </location>
</feature>
<feature type="turn" evidence="43">
    <location>
        <begin position="1106"/>
        <end position="1109"/>
    </location>
</feature>
<feature type="helix" evidence="43">
    <location>
        <begin position="1110"/>
        <end position="1112"/>
    </location>
</feature>
<feature type="helix" evidence="43">
    <location>
        <begin position="1118"/>
        <end position="1121"/>
    </location>
</feature>
<feature type="helix" evidence="43">
    <location>
        <begin position="1126"/>
        <end position="1129"/>
    </location>
</feature>
<feature type="helix" evidence="43">
    <location>
        <begin position="1136"/>
        <end position="1144"/>
    </location>
</feature>
<feature type="helix" evidence="43">
    <location>
        <begin position="1151"/>
        <end position="1168"/>
    </location>
</feature>
<feature type="helix" evidence="43">
    <location>
        <begin position="1174"/>
        <end position="1197"/>
    </location>
</feature>
<feature type="strand" evidence="46">
    <location>
        <begin position="1281"/>
        <end position="1283"/>
    </location>
</feature>
<feature type="turn" evidence="46">
    <location>
        <begin position="1285"/>
        <end position="1287"/>
    </location>
</feature>
<feature type="strand" evidence="46">
    <location>
        <begin position="1290"/>
        <end position="1292"/>
    </location>
</feature>
<feature type="helix" evidence="46">
    <location>
        <begin position="1293"/>
        <end position="1296"/>
    </location>
</feature>
<feature type="turn" evidence="46">
    <location>
        <begin position="1300"/>
        <end position="1302"/>
    </location>
</feature>
<feature type="helix" evidence="46">
    <location>
        <begin position="1310"/>
        <end position="1316"/>
    </location>
</feature>
<feature type="turn" evidence="47">
    <location>
        <begin position="1327"/>
        <end position="1329"/>
    </location>
</feature>
<feature type="helix" evidence="46">
    <location>
        <begin position="1334"/>
        <end position="1350"/>
    </location>
</feature>
<feature type="strand" evidence="46">
    <location>
        <begin position="1358"/>
        <end position="1371"/>
    </location>
</feature>
<feature type="helix" evidence="46">
    <location>
        <begin position="1374"/>
        <end position="1380"/>
    </location>
</feature>
<feature type="turn" evidence="46">
    <location>
        <begin position="1381"/>
        <end position="1384"/>
    </location>
</feature>
<feature type="strand" evidence="46">
    <location>
        <begin position="1388"/>
        <end position="1403"/>
    </location>
</feature>
<feature type="strand" evidence="46">
    <location>
        <begin position="1406"/>
        <end position="1418"/>
    </location>
</feature>
<feature type="strand" evidence="46">
    <location>
        <begin position="1420"/>
        <end position="1422"/>
    </location>
</feature>
<feature type="strand" evidence="47">
    <location>
        <begin position="1424"/>
        <end position="1426"/>
    </location>
</feature>
<feature type="strand" evidence="46">
    <location>
        <begin position="1429"/>
        <end position="1437"/>
    </location>
</feature>
<feature type="helix" evidence="46">
    <location>
        <begin position="1444"/>
        <end position="1446"/>
    </location>
</feature>
<feature type="helix" evidence="46">
    <location>
        <begin position="1447"/>
        <end position="1465"/>
    </location>
</feature>
<feature type="strand" evidence="46">
    <location>
        <begin position="1469"/>
        <end position="1473"/>
    </location>
</feature>
<feature type="strand" evidence="45">
    <location>
        <begin position="1478"/>
        <end position="1480"/>
    </location>
</feature>
<feature type="strand" evidence="46">
    <location>
        <begin position="1483"/>
        <end position="1486"/>
    </location>
</feature>
<feature type="helix" evidence="46">
    <location>
        <begin position="1497"/>
        <end position="1513"/>
    </location>
</feature>
<feature type="strand" evidence="46">
    <location>
        <begin position="1519"/>
        <end position="1522"/>
    </location>
</feature>
<feature type="helix" evidence="46">
    <location>
        <begin position="1523"/>
        <end position="1527"/>
    </location>
</feature>
<feature type="turn" evidence="46">
    <location>
        <begin position="1528"/>
        <end position="1531"/>
    </location>
</feature>
<feature type="helix" evidence="46">
    <location>
        <begin position="1535"/>
        <end position="1537"/>
    </location>
</feature>
<feature type="helix" evidence="46">
    <location>
        <begin position="1545"/>
        <end position="1552"/>
    </location>
</feature>
<feature type="turn" evidence="45">
    <location>
        <begin position="1553"/>
        <end position="1555"/>
    </location>
</feature>
<feature type="helix" evidence="46">
    <location>
        <begin position="1622"/>
        <end position="1628"/>
    </location>
</feature>
<feature type="helix" evidence="46">
    <location>
        <begin position="1629"/>
        <end position="1632"/>
    </location>
</feature>
<feature type="strand" evidence="46">
    <location>
        <begin position="1633"/>
        <end position="1637"/>
    </location>
</feature>
<feature type="helix" evidence="46">
    <location>
        <begin position="1660"/>
        <end position="1662"/>
    </location>
</feature>
<feature type="strand" evidence="46">
    <location>
        <begin position="1663"/>
        <end position="1665"/>
    </location>
</feature>
<feature type="helix" evidence="46">
    <location>
        <begin position="1666"/>
        <end position="1675"/>
    </location>
</feature>
<feature type="helix" evidence="46">
    <location>
        <begin position="1682"/>
        <end position="1699"/>
    </location>
</feature>
<feature type="turn" evidence="46">
    <location>
        <begin position="1709"/>
        <end position="1711"/>
    </location>
</feature>
<feature type="strand" evidence="46">
    <location>
        <begin position="1719"/>
        <end position="1726"/>
    </location>
</feature>
<feature type="helix" evidence="37">
    <location>
        <begin position="1731"/>
        <end position="1737"/>
    </location>
</feature>
<feature type="strand" evidence="46">
    <location>
        <begin position="1743"/>
        <end position="1745"/>
    </location>
</feature>
<feature type="helix" evidence="32">
    <location>
        <begin position="1765"/>
        <end position="1785"/>
    </location>
</feature>
<feature type="helix" evidence="32">
    <location>
        <begin position="1794"/>
        <end position="1808"/>
    </location>
</feature>
<feature type="helix" evidence="32">
    <location>
        <begin position="1812"/>
        <end position="1815"/>
    </location>
</feature>
<feature type="helix" evidence="32">
    <location>
        <begin position="1818"/>
        <end position="1833"/>
    </location>
</feature>
<feature type="strand" evidence="42">
    <location>
        <begin position="1840"/>
        <end position="1843"/>
    </location>
</feature>
<feature type="helix" evidence="32">
    <location>
        <begin position="1844"/>
        <end position="1849"/>
    </location>
</feature>
<feature type="strand" evidence="34">
    <location>
        <begin position="2061"/>
        <end position="2064"/>
    </location>
</feature>
<feature type="helix" evidence="33">
    <location>
        <begin position="2068"/>
        <end position="2075"/>
    </location>
</feature>
<feature type="strand" evidence="33">
    <location>
        <begin position="2076"/>
        <end position="2079"/>
    </location>
</feature>
<feature type="helix" evidence="33">
    <location>
        <begin position="2088"/>
        <end position="2091"/>
    </location>
</feature>
<feature type="helix" evidence="33">
    <location>
        <begin position="2097"/>
        <end position="2100"/>
    </location>
</feature>
<feature type="helix" evidence="33">
    <location>
        <begin position="2102"/>
        <end position="2104"/>
    </location>
</feature>
<feature type="strand" evidence="33">
    <location>
        <begin position="2106"/>
        <end position="2108"/>
    </location>
</feature>
<dbReference type="EC" id="2.3.1.48" evidence="13"/>
<dbReference type="EC" id="2.3.1.-" evidence="3 19"/>
<dbReference type="EMBL" id="S66385">
    <property type="protein sequence ID" value="AAB28651.1"/>
    <property type="molecule type" value="mRNA"/>
</dbReference>
<dbReference type="EMBL" id="AC132380">
    <property type="status" value="NOT_ANNOTATED_CDS"/>
    <property type="molecule type" value="Genomic_DNA"/>
</dbReference>
<dbReference type="CCDS" id="CCDS27915.1"/>
<dbReference type="PIR" id="S39161">
    <property type="entry name" value="S39161"/>
</dbReference>
<dbReference type="PDB" id="1F81">
    <property type="method" value="NMR"/>
    <property type="chains" value="A=1764-1850"/>
</dbReference>
<dbReference type="PDB" id="1JJS">
    <property type="method" value="NMR"/>
    <property type="chains" value="A=2067-2112"/>
</dbReference>
<dbReference type="PDB" id="1KBH">
    <property type="method" value="NMR"/>
    <property type="chains" value="B=2059-2117"/>
</dbReference>
<dbReference type="PDB" id="1KDX">
    <property type="method" value="NMR"/>
    <property type="chains" value="A=586-666"/>
</dbReference>
<dbReference type="PDB" id="1L8C">
    <property type="method" value="NMR"/>
    <property type="chains" value="A=345-439"/>
</dbReference>
<dbReference type="PDB" id="1R8U">
    <property type="method" value="NMR"/>
    <property type="chains" value="B=340-439"/>
</dbReference>
<dbReference type="PDB" id="1SB0">
    <property type="method" value="NMR"/>
    <property type="chains" value="A=586-672"/>
</dbReference>
<dbReference type="PDB" id="1TOT">
    <property type="method" value="NMR"/>
    <property type="chains" value="A=1700-1751"/>
</dbReference>
<dbReference type="PDB" id="1U2N">
    <property type="method" value="NMR"/>
    <property type="chains" value="A=340-439"/>
</dbReference>
<dbReference type="PDB" id="2AGH">
    <property type="method" value="NMR"/>
    <property type="chains" value="B=586-672"/>
</dbReference>
<dbReference type="PDB" id="2C52">
    <property type="method" value="NMR"/>
    <property type="chains" value="A=2059-2117"/>
</dbReference>
<dbReference type="PDB" id="2KA4">
    <property type="method" value="NMR"/>
    <property type="chains" value="A=340-439"/>
</dbReference>
<dbReference type="PDB" id="2KA6">
    <property type="method" value="NMR"/>
    <property type="chains" value="A=1764-1855"/>
</dbReference>
<dbReference type="PDB" id="2KKJ">
    <property type="method" value="NMR"/>
    <property type="chains" value="A=2059-2117"/>
</dbReference>
<dbReference type="PDB" id="2L14">
    <property type="method" value="NMR"/>
    <property type="chains" value="A=2059-2117"/>
</dbReference>
<dbReference type="PDB" id="2LQH">
    <property type="method" value="NMR"/>
    <property type="chains" value="A=586-672"/>
</dbReference>
<dbReference type="PDB" id="2LQI">
    <property type="method" value="NMR"/>
    <property type="chains" value="A=586-672"/>
</dbReference>
<dbReference type="PDB" id="2LWW">
    <property type="method" value="NMR"/>
    <property type="chains" value="A=340-439"/>
</dbReference>
<dbReference type="PDB" id="4I9O">
    <property type="method" value="X-ray"/>
    <property type="resolution" value="2.00 A"/>
    <property type="chains" value="A=586-672"/>
</dbReference>
<dbReference type="PDB" id="5HOU">
    <property type="method" value="NMR"/>
    <property type="chains" value="A=340-439"/>
</dbReference>
<dbReference type="PDB" id="5HP0">
    <property type="method" value="NMR"/>
    <property type="chains" value="A=1764-1857"/>
</dbReference>
<dbReference type="PDB" id="5HPD">
    <property type="method" value="NMR"/>
    <property type="chains" value="A=1764-1855"/>
</dbReference>
<dbReference type="PDB" id="5U4K">
    <property type="method" value="NMR"/>
    <property type="chains" value="A=586-672"/>
</dbReference>
<dbReference type="PDB" id="5U7G">
    <property type="method" value="X-ray"/>
    <property type="resolution" value="2.40 A"/>
    <property type="chains" value="A/B=1079-1556"/>
</dbReference>
<dbReference type="PDB" id="5W0I">
    <property type="method" value="X-ray"/>
    <property type="resolution" value="1.43 A"/>
    <property type="chains" value="A=1083-1198"/>
</dbReference>
<dbReference type="PDB" id="6DMX">
    <property type="method" value="X-ray"/>
    <property type="resolution" value="2.80 A"/>
    <property type="chains" value="B/D/G/I=586-672"/>
</dbReference>
<dbReference type="PDB" id="6DNQ">
    <property type="method" value="X-ray"/>
    <property type="resolution" value="2.35 A"/>
    <property type="chains" value="B/D=586-672"/>
</dbReference>
<dbReference type="PDB" id="7LVS">
    <property type="method" value="X-ray"/>
    <property type="resolution" value="2.02 A"/>
    <property type="chains" value="B=340-439"/>
</dbReference>
<dbReference type="PDB" id="8CMZ">
    <property type="method" value="X-ray"/>
    <property type="resolution" value="2.25 A"/>
    <property type="chains" value="A=1079-1556, A=1619-1751"/>
</dbReference>
<dbReference type="PDB" id="8CN0">
    <property type="method" value="X-ray"/>
    <property type="resolution" value="2.44 A"/>
    <property type="chains" value="A=1086-1556, A=1619-1751"/>
</dbReference>
<dbReference type="PDB" id="8CNA">
    <property type="method" value="X-ray"/>
    <property type="resolution" value="2.46 A"/>
    <property type="chains" value="A=1082-1556, A=1619-1751"/>
</dbReference>
<dbReference type="PDB" id="8CNB">
    <property type="method" value="X-ray"/>
    <property type="resolution" value="1.99 A"/>
    <property type="chains" value="A=1079-1555, A=1620-1751"/>
</dbReference>
<dbReference type="PDB" id="8CND">
    <property type="method" value="X-ray"/>
    <property type="resolution" value="2.97 A"/>
    <property type="chains" value="A=1086-1556, A=1619-1751"/>
</dbReference>
<dbReference type="PDB" id="8OG2">
    <property type="method" value="X-ray"/>
    <property type="resolution" value="2.47 A"/>
    <property type="chains" value="A=1079-1556, A=1620-1751"/>
</dbReference>
<dbReference type="PDBsum" id="1F81"/>
<dbReference type="PDBsum" id="1JJS"/>
<dbReference type="PDBsum" id="1KBH"/>
<dbReference type="PDBsum" id="1KDX"/>
<dbReference type="PDBsum" id="1L8C"/>
<dbReference type="PDBsum" id="1R8U"/>
<dbReference type="PDBsum" id="1SB0"/>
<dbReference type="PDBsum" id="1TOT"/>
<dbReference type="PDBsum" id="1U2N"/>
<dbReference type="PDBsum" id="2AGH"/>
<dbReference type="PDBsum" id="2C52"/>
<dbReference type="PDBsum" id="2KA4"/>
<dbReference type="PDBsum" id="2KA6"/>
<dbReference type="PDBsum" id="2KKJ"/>
<dbReference type="PDBsum" id="2L14"/>
<dbReference type="PDBsum" id="2LQH"/>
<dbReference type="PDBsum" id="2LQI"/>
<dbReference type="PDBsum" id="2LWW"/>
<dbReference type="PDBsum" id="4I9O"/>
<dbReference type="PDBsum" id="5HOU"/>
<dbReference type="PDBsum" id="5HP0"/>
<dbReference type="PDBsum" id="5HPD"/>
<dbReference type="PDBsum" id="5U4K"/>
<dbReference type="PDBsum" id="5U7G"/>
<dbReference type="PDBsum" id="5W0I"/>
<dbReference type="PDBsum" id="6DMX"/>
<dbReference type="PDBsum" id="6DNQ"/>
<dbReference type="PDBsum" id="7LVS"/>
<dbReference type="PDBsum" id="8CMZ"/>
<dbReference type="PDBsum" id="8CN0"/>
<dbReference type="PDBsum" id="8CNA"/>
<dbReference type="PDBsum" id="8CNB"/>
<dbReference type="PDBsum" id="8CND"/>
<dbReference type="PDBsum" id="8OG2"/>
<dbReference type="BMRB" id="P45481"/>
<dbReference type="SASBDB" id="P45481"/>
<dbReference type="SMR" id="P45481"/>
<dbReference type="CORUM" id="P45481"/>
<dbReference type="DIP" id="DIP-5974N"/>
<dbReference type="FunCoup" id="P45481">
    <property type="interactions" value="2751"/>
</dbReference>
<dbReference type="IntAct" id="P45481">
    <property type="interactions" value="39"/>
</dbReference>
<dbReference type="MINT" id="P45481"/>
<dbReference type="STRING" id="10090.ENSMUSP00000023165"/>
<dbReference type="GlyGen" id="P45481">
    <property type="glycosylation" value="10 sites, 1 O-linked glycan (5 sites)"/>
</dbReference>
<dbReference type="iPTMnet" id="P45481"/>
<dbReference type="PhosphoSitePlus" id="P45481"/>
<dbReference type="SwissPalm" id="P45481"/>
<dbReference type="jPOST" id="P45481"/>
<dbReference type="PaxDb" id="10090-ENSMUSP00000023165"/>
<dbReference type="ProteomicsDB" id="281475"/>
<dbReference type="Pumba" id="P45481"/>
<dbReference type="AGR" id="MGI:1098280"/>
<dbReference type="MGI" id="MGI:1098280">
    <property type="gene designation" value="Crebbp"/>
</dbReference>
<dbReference type="eggNOG" id="KOG1778">
    <property type="taxonomic scope" value="Eukaryota"/>
</dbReference>
<dbReference type="InParanoid" id="P45481"/>
<dbReference type="Reactome" id="R-MMU-1234158">
    <property type="pathway name" value="Regulation of gene expression by Hypoxia-inducible Factor"/>
</dbReference>
<dbReference type="Reactome" id="R-MMU-201722">
    <property type="pathway name" value="Formation of the beta-catenin:TCF transactivating complex"/>
</dbReference>
<dbReference type="Reactome" id="R-MMU-2122947">
    <property type="pathway name" value="NOTCH1 Intracellular Domain Regulates Transcription"/>
</dbReference>
<dbReference type="Reactome" id="R-MMU-3134973">
    <property type="pathway name" value="LRR FLII-interacting protein 1 (LRRFIP1) activates type I IFN production"/>
</dbReference>
<dbReference type="Reactome" id="R-MMU-3371568">
    <property type="pathway name" value="Attenuation phase"/>
</dbReference>
<dbReference type="Reactome" id="R-MMU-350054">
    <property type="pathway name" value="Notch-HLH transcription pathway"/>
</dbReference>
<dbReference type="Reactome" id="R-MMU-400206">
    <property type="pathway name" value="Regulation of lipid metabolism by PPARalpha"/>
</dbReference>
<dbReference type="Reactome" id="R-MMU-5621575">
    <property type="pathway name" value="CD209 (DC-SIGN) signaling"/>
</dbReference>
<dbReference type="Reactome" id="R-MMU-8866907">
    <property type="pathway name" value="Activation of the TFAP2 (AP-2) family of transcription factors"/>
</dbReference>
<dbReference type="Reactome" id="R-MMU-8939246">
    <property type="pathway name" value="RUNX1 regulates transcription of genes involved in differentiation of myeloid cells"/>
</dbReference>
<dbReference type="Reactome" id="R-MMU-8941856">
    <property type="pathway name" value="RUNX3 regulates NOTCH signaling"/>
</dbReference>
<dbReference type="Reactome" id="R-MMU-9018519">
    <property type="pathway name" value="Estrogen-dependent gene expression"/>
</dbReference>
<dbReference type="Reactome" id="R-MMU-933541">
    <property type="pathway name" value="TRAF6 mediated IRF7 activation"/>
</dbReference>
<dbReference type="Reactome" id="R-MMU-9617629">
    <property type="pathway name" value="Regulation of FOXO transcriptional activity by acetylation"/>
</dbReference>
<dbReference type="Reactome" id="R-MMU-9707564">
    <property type="pathway name" value="Cytoprotection by HMOX1"/>
</dbReference>
<dbReference type="Reactome" id="R-MMU-9759194">
    <property type="pathway name" value="Nuclear events mediated by NFE2L2"/>
</dbReference>
<dbReference type="Reactome" id="R-MMU-9856649">
    <property type="pathway name" value="Transcriptional and post-translational regulation of MITF-M expression and activity"/>
</dbReference>
<dbReference type="ChiTaRS" id="Crebbp">
    <property type="organism name" value="mouse"/>
</dbReference>
<dbReference type="EvolutionaryTrace" id="P45481"/>
<dbReference type="PRO" id="PR:P45481"/>
<dbReference type="Proteomes" id="UP000000589">
    <property type="component" value="Unplaced"/>
</dbReference>
<dbReference type="RNAct" id="P45481">
    <property type="molecule type" value="protein"/>
</dbReference>
<dbReference type="GO" id="GO:0000785">
    <property type="term" value="C:chromatin"/>
    <property type="evidence" value="ECO:0000314"/>
    <property type="project" value="BHF-UCL"/>
</dbReference>
<dbReference type="GO" id="GO:0005737">
    <property type="term" value="C:cytoplasm"/>
    <property type="evidence" value="ECO:0007669"/>
    <property type="project" value="UniProtKB-SubCell"/>
</dbReference>
<dbReference type="GO" id="GO:0000123">
    <property type="term" value="C:histone acetyltransferase complex"/>
    <property type="evidence" value="ECO:0000314"/>
    <property type="project" value="MGI"/>
</dbReference>
<dbReference type="GO" id="GO:0005654">
    <property type="term" value="C:nucleoplasm"/>
    <property type="evidence" value="ECO:0000304"/>
    <property type="project" value="Reactome"/>
</dbReference>
<dbReference type="GO" id="GO:0005634">
    <property type="term" value="C:nucleus"/>
    <property type="evidence" value="ECO:0000314"/>
    <property type="project" value="MGI"/>
</dbReference>
<dbReference type="GO" id="GO:0000940">
    <property type="term" value="C:outer kinetochore"/>
    <property type="evidence" value="ECO:0000314"/>
    <property type="project" value="MGI"/>
</dbReference>
<dbReference type="GO" id="GO:0016605">
    <property type="term" value="C:PML body"/>
    <property type="evidence" value="ECO:0000266"/>
    <property type="project" value="MGI"/>
</dbReference>
<dbReference type="GO" id="GO:0032991">
    <property type="term" value="C:protein-containing complex"/>
    <property type="evidence" value="ECO:0000315"/>
    <property type="project" value="CAFA"/>
</dbReference>
<dbReference type="GO" id="GO:0090575">
    <property type="term" value="C:RNA polymerase II transcription regulator complex"/>
    <property type="evidence" value="ECO:0000314"/>
    <property type="project" value="MGI"/>
</dbReference>
<dbReference type="GO" id="GO:0005667">
    <property type="term" value="C:transcription regulator complex"/>
    <property type="evidence" value="ECO:0000314"/>
    <property type="project" value="MGI"/>
</dbReference>
<dbReference type="GO" id="GO:0016407">
    <property type="term" value="F:acetyltransferase activity"/>
    <property type="evidence" value="ECO:0000250"/>
    <property type="project" value="UniProtKB"/>
</dbReference>
<dbReference type="GO" id="GO:0008140">
    <property type="term" value="F:cAMP response element binding protein binding"/>
    <property type="evidence" value="ECO:0000353"/>
    <property type="project" value="CAFA"/>
</dbReference>
<dbReference type="GO" id="GO:0003682">
    <property type="term" value="F:chromatin binding"/>
    <property type="evidence" value="ECO:0000314"/>
    <property type="project" value="MGI"/>
</dbReference>
<dbReference type="GO" id="GO:0003684">
    <property type="term" value="F:damaged DNA binding"/>
    <property type="evidence" value="ECO:0000250"/>
    <property type="project" value="UniProtKB"/>
</dbReference>
<dbReference type="GO" id="GO:0097718">
    <property type="term" value="F:disordered domain specific binding"/>
    <property type="evidence" value="ECO:0000353"/>
    <property type="project" value="CAFA"/>
</dbReference>
<dbReference type="GO" id="GO:0003677">
    <property type="term" value="F:DNA binding"/>
    <property type="evidence" value="ECO:0000314"/>
    <property type="project" value="MGI"/>
</dbReference>
<dbReference type="GO" id="GO:0140297">
    <property type="term" value="F:DNA-binding transcription factor binding"/>
    <property type="evidence" value="ECO:0000250"/>
    <property type="project" value="UniProtKB"/>
</dbReference>
<dbReference type="GO" id="GO:0004402">
    <property type="term" value="F:histone acetyltransferase activity"/>
    <property type="evidence" value="ECO:0000314"/>
    <property type="project" value="MGI"/>
</dbReference>
<dbReference type="GO" id="GO:0043993">
    <property type="term" value="F:histone H3K18 acetyltransferase activity"/>
    <property type="evidence" value="ECO:0000250"/>
    <property type="project" value="UniProtKB"/>
</dbReference>
<dbReference type="GO" id="GO:0044017">
    <property type="term" value="F:histone H3K27 acetyltransferase activity"/>
    <property type="evidence" value="ECO:0000250"/>
    <property type="project" value="UniProtKB"/>
</dbReference>
<dbReference type="GO" id="GO:0060090">
    <property type="term" value="F:molecular adaptor activity"/>
    <property type="evidence" value="ECO:0000269"/>
    <property type="project" value="DisProt"/>
</dbReference>
<dbReference type="GO" id="GO:0043426">
    <property type="term" value="F:MRF binding"/>
    <property type="evidence" value="ECO:0000250"/>
    <property type="project" value="UniProtKB"/>
</dbReference>
<dbReference type="GO" id="GO:0120300">
    <property type="term" value="F:peptide lactyltransferase (CoA-dependent) activity"/>
    <property type="evidence" value="ECO:0000250"/>
    <property type="project" value="UniProtKB"/>
</dbReference>
<dbReference type="GO" id="GO:0019904">
    <property type="term" value="F:protein domain specific binding"/>
    <property type="evidence" value="ECO:0000353"/>
    <property type="project" value="CAFA"/>
</dbReference>
<dbReference type="GO" id="GO:0061733">
    <property type="term" value="F:protein-lysine-acetyltransferase activity"/>
    <property type="evidence" value="ECO:0000269"/>
    <property type="project" value="Reactome"/>
</dbReference>
<dbReference type="GO" id="GO:0000977">
    <property type="term" value="F:RNA polymerase II transcription regulatory region sequence-specific DNA binding"/>
    <property type="evidence" value="ECO:0000314"/>
    <property type="project" value="MGI"/>
</dbReference>
<dbReference type="GO" id="GO:0061629">
    <property type="term" value="F:RNA polymerase II-specific DNA-binding transcription factor binding"/>
    <property type="evidence" value="ECO:0000353"/>
    <property type="project" value="UniProtKB"/>
</dbReference>
<dbReference type="GO" id="GO:0001093">
    <property type="term" value="F:TFIIB-class transcription factor binding"/>
    <property type="evidence" value="ECO:0000353"/>
    <property type="project" value="MGI"/>
</dbReference>
<dbReference type="GO" id="GO:0003713">
    <property type="term" value="F:transcription coactivator activity"/>
    <property type="evidence" value="ECO:0000314"/>
    <property type="project" value="MGI"/>
</dbReference>
<dbReference type="GO" id="GO:0008270">
    <property type="term" value="F:zinc ion binding"/>
    <property type="evidence" value="ECO:0000315"/>
    <property type="project" value="CAFA"/>
</dbReference>
<dbReference type="GO" id="GO:0035729">
    <property type="term" value="P:cellular response to hepatocyte growth factor stimulus"/>
    <property type="evidence" value="ECO:0000314"/>
    <property type="project" value="MGI"/>
</dbReference>
<dbReference type="GO" id="GO:0034644">
    <property type="term" value="P:cellular response to UV"/>
    <property type="evidence" value="ECO:0000250"/>
    <property type="project" value="UniProtKB"/>
</dbReference>
<dbReference type="GO" id="GO:0098586">
    <property type="term" value="P:cellular response to virus"/>
    <property type="evidence" value="ECO:0000315"/>
    <property type="project" value="CAFA"/>
</dbReference>
<dbReference type="GO" id="GO:0060325">
    <property type="term" value="P:face morphogenesis"/>
    <property type="evidence" value="ECO:0000315"/>
    <property type="project" value="ARUK-UCL"/>
</dbReference>
<dbReference type="GO" id="GO:0030718">
    <property type="term" value="P:germ-line stem cell population maintenance"/>
    <property type="evidence" value="ECO:0000315"/>
    <property type="project" value="MGI"/>
</dbReference>
<dbReference type="GO" id="GO:0018076">
    <property type="term" value="P:N-terminal peptidyl-lysine acetylation"/>
    <property type="evidence" value="ECO:0000250"/>
    <property type="project" value="UniProtKB"/>
</dbReference>
<dbReference type="GO" id="GO:0032688">
    <property type="term" value="P:negative regulation of interferon-beta production"/>
    <property type="evidence" value="ECO:0000315"/>
    <property type="project" value="CAFA"/>
</dbReference>
<dbReference type="GO" id="GO:0016479">
    <property type="term" value="P:negative regulation of transcription by RNA polymerase I"/>
    <property type="evidence" value="ECO:0000250"/>
    <property type="project" value="UniProtKB"/>
</dbReference>
<dbReference type="GO" id="GO:0048525">
    <property type="term" value="P:negative regulation of viral process"/>
    <property type="evidence" value="ECO:0000315"/>
    <property type="project" value="CAFA"/>
</dbReference>
<dbReference type="GO" id="GO:0051091">
    <property type="term" value="P:positive regulation of DNA-binding transcription factor activity"/>
    <property type="evidence" value="ECO:0000304"/>
    <property type="project" value="UniProtKB"/>
</dbReference>
<dbReference type="GO" id="GO:0045893">
    <property type="term" value="P:positive regulation of DNA-templated transcription"/>
    <property type="evidence" value="ECO:0000314"/>
    <property type="project" value="UniProtKB"/>
</dbReference>
<dbReference type="GO" id="GO:1905168">
    <property type="term" value="P:positive regulation of double-strand break repair via homologous recombination"/>
    <property type="evidence" value="ECO:0000250"/>
    <property type="project" value="UniProtKB"/>
</dbReference>
<dbReference type="GO" id="GO:0010628">
    <property type="term" value="P:positive regulation of gene expression"/>
    <property type="evidence" value="ECO:0000316"/>
    <property type="project" value="MGI"/>
</dbReference>
<dbReference type="GO" id="GO:0045944">
    <property type="term" value="P:positive regulation of transcription by RNA polymerase II"/>
    <property type="evidence" value="ECO:0000316"/>
    <property type="project" value="MGI"/>
</dbReference>
<dbReference type="GO" id="GO:0031648">
    <property type="term" value="P:protein destabilization"/>
    <property type="evidence" value="ECO:0000250"/>
    <property type="project" value="UniProtKB"/>
</dbReference>
<dbReference type="GO" id="GO:0006355">
    <property type="term" value="P:regulation of DNA-templated transcription"/>
    <property type="evidence" value="ECO:0000314"/>
    <property type="project" value="MGI"/>
</dbReference>
<dbReference type="GO" id="GO:0048511">
    <property type="term" value="P:rhythmic process"/>
    <property type="evidence" value="ECO:0007669"/>
    <property type="project" value="UniProtKB-KW"/>
</dbReference>
<dbReference type="CDD" id="cd05495">
    <property type="entry name" value="Bromo_cbp_like"/>
    <property type="match status" value="1"/>
</dbReference>
<dbReference type="CDD" id="cd20910">
    <property type="entry name" value="NCBD_CREBBP-p300_like"/>
    <property type="match status" value="1"/>
</dbReference>
<dbReference type="CDD" id="cd15557">
    <property type="entry name" value="PHD_CBP_p300"/>
    <property type="match status" value="1"/>
</dbReference>
<dbReference type="CDD" id="cd15802">
    <property type="entry name" value="RING_CBP-p300"/>
    <property type="match status" value="1"/>
</dbReference>
<dbReference type="CDD" id="cd02337">
    <property type="entry name" value="ZZ_CBP"/>
    <property type="match status" value="1"/>
</dbReference>
<dbReference type="DisProt" id="DP00348"/>
<dbReference type="FunFam" id="1.10.246.20:FF:000001">
    <property type="entry name" value="E1A binding protein p300"/>
    <property type="match status" value="1"/>
</dbReference>
<dbReference type="FunFam" id="1.20.1020.10:FF:000001">
    <property type="entry name" value="E1A binding protein p300"/>
    <property type="match status" value="1"/>
</dbReference>
<dbReference type="FunFam" id="1.20.1020.10:FF:000002">
    <property type="entry name" value="E1A binding protein p300"/>
    <property type="match status" value="1"/>
</dbReference>
<dbReference type="FunFam" id="2.10.110.40:FF:000001">
    <property type="entry name" value="E1A binding protein p300"/>
    <property type="match status" value="1"/>
</dbReference>
<dbReference type="FunFam" id="3.30.60.90:FF:000003">
    <property type="entry name" value="E1A binding protein p300"/>
    <property type="match status" value="1"/>
</dbReference>
<dbReference type="FunFam" id="1.20.920.10:FF:000001">
    <property type="entry name" value="Histone acetyltransferase p300"/>
    <property type="match status" value="1"/>
</dbReference>
<dbReference type="FunFam" id="3.30.40.10:FF:000034">
    <property type="entry name" value="Histone acetyltransferase p300"/>
    <property type="match status" value="1"/>
</dbReference>
<dbReference type="Gene3D" id="2.10.110.40">
    <property type="match status" value="1"/>
</dbReference>
<dbReference type="Gene3D" id="3.30.60.90">
    <property type="match status" value="1"/>
</dbReference>
<dbReference type="Gene3D" id="1.20.920.10">
    <property type="entry name" value="Bromodomain-like"/>
    <property type="match status" value="1"/>
</dbReference>
<dbReference type="Gene3D" id="1.10.246.20">
    <property type="entry name" value="Coactivator CBP, KIX domain"/>
    <property type="match status" value="1"/>
</dbReference>
<dbReference type="Gene3D" id="1.10.1630.10">
    <property type="entry name" value="Nuclear receptor coactivator, CREB-bp-like, interlocking domain"/>
    <property type="match status" value="1"/>
</dbReference>
<dbReference type="Gene3D" id="1.20.1020.10">
    <property type="entry name" value="TAZ domain"/>
    <property type="match status" value="2"/>
</dbReference>
<dbReference type="Gene3D" id="3.30.40.10">
    <property type="entry name" value="Zinc/RING finger domain, C3HC4 (zinc finger)"/>
    <property type="match status" value="1"/>
</dbReference>
<dbReference type="IDEAL" id="IID50008"/>
<dbReference type="InterPro" id="IPR001487">
    <property type="entry name" value="Bromodomain"/>
</dbReference>
<dbReference type="InterPro" id="IPR036427">
    <property type="entry name" value="Bromodomain-like_sf"/>
</dbReference>
<dbReference type="InterPro" id="IPR018359">
    <property type="entry name" value="Bromodomain_CS"/>
</dbReference>
<dbReference type="InterPro" id="IPR031162">
    <property type="entry name" value="CBP_P300_HAT"/>
</dbReference>
<dbReference type="InterPro" id="IPR013178">
    <property type="entry name" value="Histone_AcTrfase_Rtt109/CBP"/>
</dbReference>
<dbReference type="InterPro" id="IPR003101">
    <property type="entry name" value="KIX_dom"/>
</dbReference>
<dbReference type="InterPro" id="IPR036529">
    <property type="entry name" value="KIX_dom_sf"/>
</dbReference>
<dbReference type="InterPro" id="IPR009110">
    <property type="entry name" value="Nuc_rcpt_coact"/>
</dbReference>
<dbReference type="InterPro" id="IPR014744">
    <property type="entry name" value="Nuc_rcpt_coact_CREBbp"/>
</dbReference>
<dbReference type="InterPro" id="IPR037073">
    <property type="entry name" value="Nuc_rcpt_coact_CREBbp_sf"/>
</dbReference>
<dbReference type="InterPro" id="IPR056484">
    <property type="entry name" value="PHD_P300"/>
</dbReference>
<dbReference type="InterPro" id="IPR010303">
    <property type="entry name" value="RING_CBP-p300"/>
</dbReference>
<dbReference type="InterPro" id="IPR038547">
    <property type="entry name" value="RING_CBP-p300_sf"/>
</dbReference>
<dbReference type="InterPro" id="IPR035898">
    <property type="entry name" value="TAZ_dom_sf"/>
</dbReference>
<dbReference type="InterPro" id="IPR013083">
    <property type="entry name" value="Znf_RING/FYVE/PHD"/>
</dbReference>
<dbReference type="InterPro" id="IPR000197">
    <property type="entry name" value="Znf_TAZ"/>
</dbReference>
<dbReference type="InterPro" id="IPR000433">
    <property type="entry name" value="Znf_ZZ"/>
</dbReference>
<dbReference type="InterPro" id="IPR043145">
    <property type="entry name" value="Znf_ZZ_sf"/>
</dbReference>
<dbReference type="PANTHER" id="PTHR13808">
    <property type="entry name" value="CBP/P300-RELATED"/>
    <property type="match status" value="1"/>
</dbReference>
<dbReference type="PANTHER" id="PTHR13808:SF34">
    <property type="entry name" value="CREB-BINDING PROTEIN"/>
    <property type="match status" value="1"/>
</dbReference>
<dbReference type="Pfam" id="PF00439">
    <property type="entry name" value="Bromodomain"/>
    <property type="match status" value="1"/>
</dbReference>
<dbReference type="Pfam" id="PF09030">
    <property type="entry name" value="Creb_binding"/>
    <property type="match status" value="1"/>
</dbReference>
<dbReference type="Pfam" id="PF08214">
    <property type="entry name" value="HAT_KAT11"/>
    <property type="match status" value="1"/>
</dbReference>
<dbReference type="Pfam" id="PF02172">
    <property type="entry name" value="KIX"/>
    <property type="match status" value="1"/>
</dbReference>
<dbReference type="Pfam" id="PF23570">
    <property type="entry name" value="PHD_P300"/>
    <property type="match status" value="1"/>
</dbReference>
<dbReference type="Pfam" id="PF06001">
    <property type="entry name" value="RING_CBP-p300"/>
    <property type="match status" value="1"/>
</dbReference>
<dbReference type="Pfam" id="PF02135">
    <property type="entry name" value="zf-TAZ"/>
    <property type="match status" value="2"/>
</dbReference>
<dbReference type="Pfam" id="PF00569">
    <property type="entry name" value="ZZ"/>
    <property type="match status" value="1"/>
</dbReference>
<dbReference type="PRINTS" id="PR00503">
    <property type="entry name" value="BROMODOMAIN"/>
</dbReference>
<dbReference type="SMART" id="SM00297">
    <property type="entry name" value="BROMO"/>
    <property type="match status" value="1"/>
</dbReference>
<dbReference type="SMART" id="SM01250">
    <property type="entry name" value="KAT11"/>
    <property type="match status" value="1"/>
</dbReference>
<dbReference type="SMART" id="SM00551">
    <property type="entry name" value="ZnF_TAZ"/>
    <property type="match status" value="2"/>
</dbReference>
<dbReference type="SMART" id="SM00291">
    <property type="entry name" value="ZnF_ZZ"/>
    <property type="match status" value="1"/>
</dbReference>
<dbReference type="SUPFAM" id="SSF47370">
    <property type="entry name" value="Bromodomain"/>
    <property type="match status" value="1"/>
</dbReference>
<dbReference type="SUPFAM" id="SSF47040">
    <property type="entry name" value="Kix domain of CBP (creb binding protein)"/>
    <property type="match status" value="1"/>
</dbReference>
<dbReference type="SUPFAM" id="SSF69125">
    <property type="entry name" value="Nuclear receptor coactivator interlocking domain"/>
    <property type="match status" value="1"/>
</dbReference>
<dbReference type="SUPFAM" id="SSF57850">
    <property type="entry name" value="RING/U-box"/>
    <property type="match status" value="1"/>
</dbReference>
<dbReference type="SUPFAM" id="SSF57933">
    <property type="entry name" value="TAZ domain"/>
    <property type="match status" value="2"/>
</dbReference>
<dbReference type="PROSITE" id="PS00633">
    <property type="entry name" value="BROMODOMAIN_1"/>
    <property type="match status" value="1"/>
</dbReference>
<dbReference type="PROSITE" id="PS50014">
    <property type="entry name" value="BROMODOMAIN_2"/>
    <property type="match status" value="1"/>
</dbReference>
<dbReference type="PROSITE" id="PS51727">
    <property type="entry name" value="CBP_P300_HAT"/>
    <property type="match status" value="1"/>
</dbReference>
<dbReference type="PROSITE" id="PS50952">
    <property type="entry name" value="KIX"/>
    <property type="match status" value="1"/>
</dbReference>
<dbReference type="PROSITE" id="PS50134">
    <property type="entry name" value="ZF_TAZ"/>
    <property type="match status" value="2"/>
</dbReference>
<dbReference type="PROSITE" id="PS01357">
    <property type="entry name" value="ZF_ZZ_1"/>
    <property type="match status" value="1"/>
</dbReference>
<dbReference type="PROSITE" id="PS50135">
    <property type="entry name" value="ZF_ZZ_2"/>
    <property type="match status" value="1"/>
</dbReference>
<reference key="1">
    <citation type="journal article" date="1993" name="Nature">
        <title>Phosphorylated CREB binds specifically to the nuclear protein CBP.</title>
        <authorList>
            <person name="Chrivia J.C."/>
            <person name="Kwok R.P.S."/>
            <person name="Lamb N."/>
            <person name="Hagiwara M."/>
            <person name="Montminy M.R."/>
            <person name="Goodman R.H."/>
        </authorList>
    </citation>
    <scope>NUCLEOTIDE SEQUENCE [MRNA]</scope>
    <source>
        <tissue>Brain</tissue>
    </source>
</reference>
<reference key="2">
    <citation type="journal article" date="2009" name="PLoS Biol.">
        <title>Lineage-specific biology revealed by a finished genome assembly of the mouse.</title>
        <authorList>
            <person name="Church D.M."/>
            <person name="Goodstadt L."/>
            <person name="Hillier L.W."/>
            <person name="Zody M.C."/>
            <person name="Goldstein S."/>
            <person name="She X."/>
            <person name="Bult C.J."/>
            <person name="Agarwala R."/>
            <person name="Cherry J.L."/>
            <person name="DiCuccio M."/>
            <person name="Hlavina W."/>
            <person name="Kapustin Y."/>
            <person name="Meric P."/>
            <person name="Maglott D."/>
            <person name="Birtle Z."/>
            <person name="Marques A.C."/>
            <person name="Graves T."/>
            <person name="Zhou S."/>
            <person name="Teague B."/>
            <person name="Potamousis K."/>
            <person name="Churas C."/>
            <person name="Place M."/>
            <person name="Herschleb J."/>
            <person name="Runnheim R."/>
            <person name="Forrest D."/>
            <person name="Amos-Landgraf J."/>
            <person name="Schwartz D.C."/>
            <person name="Cheng Z."/>
            <person name="Lindblad-Toh K."/>
            <person name="Eichler E.E."/>
            <person name="Ponting C.P."/>
        </authorList>
    </citation>
    <scope>NUCLEOTIDE SEQUENCE [LARGE SCALE GENOMIC DNA]</scope>
    <source>
        <strain>C57BL/6J</strain>
    </source>
</reference>
<reference key="3">
    <citation type="journal article" date="1996" name="Cell">
        <title>A CBP integrator complex mediates transcriptional activation and AP-1 inhibition by nuclear receptors.</title>
        <authorList>
            <person name="Kamei Y."/>
            <person name="Xu L."/>
            <person name="Heinzel T."/>
            <person name="Torchia J."/>
            <person name="Kurokawa R."/>
            <person name="Gloss B."/>
            <person name="Lin S.-C."/>
            <person name="Heyman R.A."/>
            <person name="Rose D.W."/>
            <person name="Glass C.K."/>
            <person name="Rosenfeld M.G."/>
        </authorList>
    </citation>
    <scope>INTERACTION WITH NCOA1</scope>
</reference>
<reference key="4">
    <citation type="journal article" date="1996" name="Mol. Cell. Biol.">
        <title>Phosphorylation of CREB at Ser-133 induces complex formation with CREB-binding protein via a direct mechanism.</title>
        <authorList>
            <person name="Parker D."/>
            <person name="Ferreri K."/>
            <person name="Nakajima T."/>
            <person name="LaMorte V.J."/>
            <person name="Evans R."/>
            <person name="Koerber S.C."/>
            <person name="Hoeger C."/>
            <person name="Montminy M.R."/>
        </authorList>
    </citation>
    <scope>INTERACTION WITH CREB1</scope>
    <scope>MUTAGENESIS OF ARG-600</scope>
</reference>
<reference key="5">
    <citation type="journal article" date="1997" name="Nature">
        <title>The transcriptional co-activator p/CIP binds CBP and mediates nuclear-receptor function.</title>
        <authorList>
            <person name="Torchia J."/>
            <person name="Rose D.W."/>
            <person name="Inostroza J."/>
            <person name="Kamei Y."/>
            <person name="Westin S."/>
            <person name="Glass C.K."/>
            <person name="Rosenfeld M.G."/>
        </authorList>
    </citation>
    <scope>INTERACTION WITH NCOA3</scope>
</reference>
<reference key="6">
    <citation type="journal article" date="1999" name="Biochem. J.">
        <title>Transcriptional autorepression of Msx1 gene is mediated by interactions of Msx1 protein with a multi-protein transcriptional complex containing TATA-binding protein, Sp1 and cAMP-response-element-binding protein-binding protein (CBP/p300).</title>
        <authorList>
            <person name="Shetty S."/>
            <person name="Takahashi T."/>
            <person name="Matsui H."/>
            <person name="Ayengar R."/>
            <person name="Raghow R."/>
        </authorList>
    </citation>
    <scope>INTERACTION WITH MSX1 AND MSX3</scope>
</reference>
<reference key="7">
    <citation type="journal article" date="1999" name="Mol. Cell. Biol.">
        <title>CREB-Binding protein acetylates hematopoietic transcription factor GATA-1 at functionally important sites.</title>
        <authorList>
            <person name="Hung H.L."/>
            <person name="Lau J."/>
            <person name="Kim A.Y."/>
            <person name="Weiss M.J."/>
            <person name="Blobel G.A."/>
        </authorList>
    </citation>
    <scope>FUNCTION</scope>
    <scope>INTERACTION WITH GATA1</scope>
    <scope>MUTAGENESIS OF 1690-LYS-CYS-1691</scope>
</reference>
<reference key="8">
    <citation type="journal article" date="2000" name="J. Biol. Chem.">
        <title>The MSG1 non-DNA-binding transactivator binds to the p300/CBP coactivators, enhancing their functional link to the Smad transcription factors.</title>
        <authorList>
            <person name="Yahata T."/>
            <person name="de Caestecker M.P."/>
            <person name="Lechleider R.J."/>
            <person name="Andriole S."/>
            <person name="Roberts A.B."/>
            <person name="Isselbacher K.J."/>
            <person name="Shioda T."/>
        </authorList>
    </citation>
    <scope>INTERACTION WITH CITED1</scope>
</reference>
<reference key="9">
    <citation type="journal article" date="2001" name="Biochem. J.">
        <title>Msx3 protein recruits histone deacetylase to down-regulate the Msx1 promoter.</title>
        <authorList>
            <person name="Mehra-Chaudhary R."/>
            <person name="Matsui H."/>
            <person name="Raghow R."/>
        </authorList>
    </citation>
    <scope>FUNCTION</scope>
    <scope>CATALYTIC ACTIVITY</scope>
    <scope>IDENTIFICATION IN A COMPLEX WITH MSX3 AND EP300</scope>
    <source>
        <tissue>Muscle</tissue>
    </source>
</reference>
<reference key="10">
    <citation type="journal article" date="2001" name="Science">
        <title>A transcriptional switch mediated by cofactor methylation.</title>
        <authorList>
            <person name="Xu W."/>
            <person name="Chen H."/>
            <person name="Du K."/>
            <person name="Asahara H."/>
            <person name="Tini M."/>
            <person name="Emerson B.M."/>
            <person name="Montminy M."/>
            <person name="Evans R.M."/>
        </authorList>
    </citation>
    <scope>INTERACTION WITH CARM1</scope>
    <scope>METHYLATION AT ARG-600 AND ARG-624</scope>
    <scope>FUNCTION</scope>
</reference>
<reference key="11">
    <citation type="journal article" date="2002" name="Genomics">
        <title>Cloning of mouse Cited4, a member of the CITED family p300/CBP-binding transcriptional coactivators: induced expression in mammary epithelial cells.</title>
        <authorList>
            <person name="Yahata T."/>
            <person name="Takedatsu H."/>
            <person name="Dunwoodie S.L."/>
            <person name="Braganca J."/>
            <person name="Swingler T."/>
            <person name="Withington S.L."/>
            <person name="Hur J."/>
            <person name="Coser K.R."/>
            <person name="Isselbacher K.J."/>
            <person name="Bhattacharya S."/>
            <person name="Shioda T."/>
        </authorList>
    </citation>
    <scope>INTERACTION WITH CITED4</scope>
</reference>
<reference key="12">
    <citation type="journal article" date="2002" name="J. Biol. Chem.">
        <title>CREB-binding protein/p300 co-activation of crystallin gene expression.</title>
        <authorList>
            <person name="Chen Q."/>
            <person name="Dowhan D.H."/>
            <person name="Liang D."/>
            <person name="Moore D.D."/>
            <person name="Overbeek P.A."/>
        </authorList>
    </citation>
    <scope>INTERACTION WITH MAF</scope>
</reference>
<reference key="13">
    <citation type="journal article" date="2003" name="Oncogene">
        <title>Synergism between p68 RNA helicase and the transcriptional coactivators CBP and p300.</title>
        <authorList>
            <person name="Rossow K.L."/>
            <person name="Janknecht R."/>
        </authorList>
    </citation>
    <scope>INTERACTION WITH DDX5</scope>
</reference>
<reference key="14">
    <citation type="journal article" date="2004" name="Proc. Natl. Acad. Sci. U.S.A.">
        <title>Silent information regulator 2 potentiates Foxo1-mediated transcription through its deacetylase activity.</title>
        <authorList>
            <person name="Daitoku H."/>
            <person name="Hatta M."/>
            <person name="Matsuzaki H."/>
            <person name="Aratani S."/>
            <person name="Ohshima T."/>
            <person name="Miyagishi M."/>
            <person name="Nakajima T."/>
            <person name="Fukamizu A."/>
        </authorList>
    </citation>
    <scope>FUNCTION IN ACETYLATION OF FOXO1</scope>
    <scope>CATALYTIC ACTIVITY</scope>
</reference>
<reference key="15">
    <citation type="journal article" date="2005" name="Proc. Natl. Acad. Sci. U.S.A.">
        <title>SUMO modification negatively modulates the transcriptional activity of CREB-binding protein via the recruitment of Daxx.</title>
        <authorList>
            <person name="Kuo H.-Y."/>
            <person name="Chang C.-C."/>
            <person name="Jeng J.-C."/>
            <person name="Hu H.-M."/>
            <person name="Lin D.-Y."/>
            <person name="Maul G.G."/>
            <person name="Kwok R.P.S."/>
            <person name="Shih H.-M."/>
        </authorList>
    </citation>
    <scope>SUMOYLATION AT LYS-999; LYS-1015; LYS-1034 AND LYS-1057</scope>
    <scope>INTERACTION WITH DAXX</scope>
    <scope>FUNCTION</scope>
    <scope>MUTAGENESIS OF LYS-999; LYS-1015; LYS-1034; LYS-1043; LYS-1053; LYS-1057; LYS-1061 AND LYS-1087</scope>
</reference>
<reference key="16">
    <citation type="journal article" date="2007" name="J. Cell. Biochem.">
        <title>Concerted activation of the Mdm2 promoter by p72 RNA helicase and the coactivators p300 and P/CAF.</title>
        <authorList>
            <person name="Shin S."/>
            <person name="Janknecht R."/>
        </authorList>
    </citation>
    <scope>INTERACTION WITH DDX17</scope>
</reference>
<reference key="17">
    <citation type="journal article" date="2008" name="Mol. Cell. Biol.">
        <title>Sizn1 is a novel protein that functions as a transcriptional coactivator of bone morphogenic protein signaling.</title>
        <authorList>
            <person name="Cho G."/>
            <person name="Lim Y."/>
            <person name="Zand D."/>
            <person name="Golden J.A."/>
        </authorList>
    </citation>
    <scope>INTERACTION WITH ZCCHC12</scope>
</reference>
<reference key="18">
    <citation type="journal article" date="2010" name="Cell">
        <title>A tissue-specific atlas of mouse protein phosphorylation and expression.</title>
        <authorList>
            <person name="Huttlin E.L."/>
            <person name="Jedrychowski M.P."/>
            <person name="Elias J.E."/>
            <person name="Goswami T."/>
            <person name="Rad R."/>
            <person name="Beausoleil S.A."/>
            <person name="Villen J."/>
            <person name="Haas W."/>
            <person name="Sowa M.E."/>
            <person name="Gygi S.P."/>
        </authorList>
    </citation>
    <scope>PHOSPHORYLATION [LARGE SCALE ANALYSIS] AT SER-120; SER-2064 AND SER-2350</scope>
    <scope>IDENTIFICATION BY MASS SPECTROMETRY [LARGE SCALE ANALYSIS]</scope>
    <source>
        <tissue>Brain</tissue>
        <tissue>Heart</tissue>
        <tissue>Kidney</tissue>
        <tissue>Liver</tissue>
        <tissue>Lung</tissue>
        <tissue>Pancreas</tissue>
        <tissue>Spleen</tissue>
        <tissue>Testis</tissue>
    </source>
</reference>
<reference key="19">
    <citation type="journal article" date="2013" name="Mol. Cell">
        <title>SIRT5-mediated lysine desuccinylation impacts diverse metabolic pathways.</title>
        <authorList>
            <person name="Park J."/>
            <person name="Chen Y."/>
            <person name="Tishkoff D.X."/>
            <person name="Peng C."/>
            <person name="Tan M."/>
            <person name="Dai L."/>
            <person name="Xie Z."/>
            <person name="Zhang Y."/>
            <person name="Zwaans B.M."/>
            <person name="Skinner M.E."/>
            <person name="Lombard D.B."/>
            <person name="Zhao Y."/>
        </authorList>
    </citation>
    <scope>ACETYLATION [LARGE SCALE ANALYSIS] AT LYS-656; LYS-1217; LYS-1596; LYS-1598 AND LYS-1745</scope>
    <scope>IDENTIFICATION BY MASS SPECTROMETRY [LARGE SCALE ANALYSIS]</scope>
    <source>
        <tissue>Embryonic fibroblast</tissue>
    </source>
</reference>
<reference key="20">
    <citation type="journal article" date="2014" name="PLoS Biol.">
        <title>Machine learning helps identify CHRONO as a circadian clock component.</title>
        <authorList>
            <person name="Anafi R.C."/>
            <person name="Lee Y."/>
            <person name="Sato T.K."/>
            <person name="Venkataraman A."/>
            <person name="Ramanathan C."/>
            <person name="Kavakli I.H."/>
            <person name="Hughes M.E."/>
            <person name="Baggs J.E."/>
            <person name="Growe J."/>
            <person name="Liu A.C."/>
            <person name="Kim J."/>
            <person name="Hogenesch J.B."/>
        </authorList>
    </citation>
    <scope>FUNCTION</scope>
    <scope>INTERACTION WITH BMAL1</scope>
</reference>
<reference key="21">
    <citation type="journal article" date="2017" name="Mol. Cell">
        <title>Nucleus-Translocated ACSS2 Promotes Gene Transcription for Lysosomal Biogenesis and Autophagy.</title>
        <authorList>
            <person name="Li X."/>
            <person name="Yu W."/>
            <person name="Qian X."/>
            <person name="Xia Y."/>
            <person name="Zheng Y."/>
            <person name="Lee J.H."/>
            <person name="Li W."/>
            <person name="Lyu J."/>
            <person name="Rao G."/>
            <person name="Zhang X."/>
            <person name="Qian C.N."/>
            <person name="Rozen S.G."/>
            <person name="Jiang T."/>
            <person name="Lu Z."/>
        </authorList>
    </citation>
    <scope>INTERACTION WITH ACSS2</scope>
</reference>
<reference key="22">
    <citation type="journal article" date="2004" name="J. Biol. Chem.">
        <title>Interaction of the TAZ1 domain of the CREB-binding protein with the activation domain of CITED2: regulation by competition between intrinsically unstructured ligands for non-identical binding sites.</title>
        <authorList>
            <person name="De Guzman R.N."/>
            <person name="Martinez-Yamout M.A."/>
            <person name="Dyson H.J."/>
            <person name="Wright P.E."/>
        </authorList>
    </citation>
    <scope>STRUCTURE BY NMR OF 340-439 IN COMPLEX WITH 220-269 OF CITED2 AND ZINC IONS</scope>
</reference>
<accession>P45481</accession>
<accession>E9QPH4</accession>
<keyword id="KW-0002">3D-structure</keyword>
<keyword id="KW-0007">Acetylation</keyword>
<keyword id="KW-0010">Activator</keyword>
<keyword id="KW-0012">Acyltransferase</keyword>
<keyword id="KW-0090">Biological rhythms</keyword>
<keyword id="KW-0103">Bromodomain</keyword>
<keyword id="KW-0963">Cytoplasm</keyword>
<keyword id="KW-1017">Isopeptide bond</keyword>
<keyword id="KW-0479">Metal-binding</keyword>
<keyword id="KW-0488">Methylation</keyword>
<keyword id="KW-0539">Nucleus</keyword>
<keyword id="KW-0597">Phosphoprotein</keyword>
<keyword id="KW-1185">Reference proteome</keyword>
<keyword id="KW-0677">Repeat</keyword>
<keyword id="KW-0804">Transcription</keyword>
<keyword id="KW-0805">Transcription regulation</keyword>
<keyword id="KW-0808">Transferase</keyword>
<keyword id="KW-0832">Ubl conjugation</keyword>
<keyword id="KW-0862">Zinc</keyword>
<keyword id="KW-0863">Zinc-finger</keyword>
<protein>
    <recommendedName>
        <fullName>Histone lysine acetyltransferase CREBBP</fullName>
        <ecNumber evidence="13">2.3.1.48</ecNumber>
    </recommendedName>
    <alternativeName>
        <fullName>Protein lactyltransferas CREBBP</fullName>
        <ecNumber evidence="3">2.3.1.-</ecNumber>
    </alternativeName>
    <alternativeName>
        <fullName>Protein-lysine acetyltransferase CREBBP</fullName>
        <ecNumber evidence="19">2.3.1.-</ecNumber>
    </alternativeName>
</protein>
<organism>
    <name type="scientific">Mus musculus</name>
    <name type="common">Mouse</name>
    <dbReference type="NCBI Taxonomy" id="10090"/>
    <lineage>
        <taxon>Eukaryota</taxon>
        <taxon>Metazoa</taxon>
        <taxon>Chordata</taxon>
        <taxon>Craniata</taxon>
        <taxon>Vertebrata</taxon>
        <taxon>Euteleostomi</taxon>
        <taxon>Mammalia</taxon>
        <taxon>Eutheria</taxon>
        <taxon>Euarchontoglires</taxon>
        <taxon>Glires</taxon>
        <taxon>Rodentia</taxon>
        <taxon>Myomorpha</taxon>
        <taxon>Muroidea</taxon>
        <taxon>Muridae</taxon>
        <taxon>Murinae</taxon>
        <taxon>Mus</taxon>
        <taxon>Mus</taxon>
    </lineage>
</organism>
<evidence type="ECO:0000250" key="1"/>
<evidence type="ECO:0000250" key="2">
    <source>
        <dbReference type="UniProtKB" id="Q09472"/>
    </source>
</evidence>
<evidence type="ECO:0000250" key="3">
    <source>
        <dbReference type="UniProtKB" id="Q92793"/>
    </source>
</evidence>
<evidence type="ECO:0000255" key="4">
    <source>
        <dbReference type="PROSITE-ProRule" id="PRU00035"/>
    </source>
</evidence>
<evidence type="ECO:0000255" key="5">
    <source>
        <dbReference type="PROSITE-ProRule" id="PRU00203"/>
    </source>
</evidence>
<evidence type="ECO:0000255" key="6">
    <source>
        <dbReference type="PROSITE-ProRule" id="PRU00228"/>
    </source>
</evidence>
<evidence type="ECO:0000255" key="7">
    <source>
        <dbReference type="PROSITE-ProRule" id="PRU00311"/>
    </source>
</evidence>
<evidence type="ECO:0000255" key="8">
    <source>
        <dbReference type="PROSITE-ProRule" id="PRU01065"/>
    </source>
</evidence>
<evidence type="ECO:0000256" key="9">
    <source>
        <dbReference type="SAM" id="MobiDB-lite"/>
    </source>
</evidence>
<evidence type="ECO:0000269" key="10">
    <source>
    </source>
</evidence>
<evidence type="ECO:0000269" key="11">
    <source>
    </source>
</evidence>
<evidence type="ECO:0000269" key="12">
    <source>
    </source>
</evidence>
<evidence type="ECO:0000269" key="13">
    <source>
    </source>
</evidence>
<evidence type="ECO:0000269" key="14">
    <source>
    </source>
</evidence>
<evidence type="ECO:0000269" key="15">
    <source>
    </source>
</evidence>
<evidence type="ECO:0000269" key="16">
    <source>
    </source>
</evidence>
<evidence type="ECO:0000269" key="17">
    <source>
    </source>
</evidence>
<evidence type="ECO:0000269" key="18">
    <source>
    </source>
</evidence>
<evidence type="ECO:0000269" key="19">
    <source>
    </source>
</evidence>
<evidence type="ECO:0000269" key="20">
    <source>
    </source>
</evidence>
<evidence type="ECO:0000269" key="21">
    <source>
    </source>
</evidence>
<evidence type="ECO:0000269" key="22">
    <source>
    </source>
</evidence>
<evidence type="ECO:0000269" key="23">
    <source>
    </source>
</evidence>
<evidence type="ECO:0000269" key="24">
    <source>
    </source>
</evidence>
<evidence type="ECO:0000269" key="25">
    <source>
    </source>
</evidence>
<evidence type="ECO:0000269" key="26">
    <source>
    </source>
</evidence>
<evidence type="ECO:0000269" key="27">
    <source>
    </source>
</evidence>
<evidence type="ECO:0000305" key="28"/>
<evidence type="ECO:0000305" key="29">
    <source>
    </source>
</evidence>
<evidence type="ECO:0007744" key="30">
    <source>
    </source>
</evidence>
<evidence type="ECO:0007744" key="31">
    <source>
    </source>
</evidence>
<evidence type="ECO:0007829" key="32">
    <source>
        <dbReference type="PDB" id="1F81"/>
    </source>
</evidence>
<evidence type="ECO:0007829" key="33">
    <source>
        <dbReference type="PDB" id="1JJS"/>
    </source>
</evidence>
<evidence type="ECO:0007829" key="34">
    <source>
        <dbReference type="PDB" id="1KBH"/>
    </source>
</evidence>
<evidence type="ECO:0007829" key="35">
    <source>
        <dbReference type="PDB" id="1R8U"/>
    </source>
</evidence>
<evidence type="ECO:0007829" key="36">
    <source>
        <dbReference type="PDB" id="1SB0"/>
    </source>
</evidence>
<evidence type="ECO:0007829" key="37">
    <source>
        <dbReference type="PDB" id="1TOT"/>
    </source>
</evidence>
<evidence type="ECO:0007829" key="38">
    <source>
        <dbReference type="PDB" id="1U2N"/>
    </source>
</evidence>
<evidence type="ECO:0007829" key="39">
    <source>
        <dbReference type="PDB" id="2KA4"/>
    </source>
</evidence>
<evidence type="ECO:0007829" key="40">
    <source>
        <dbReference type="PDB" id="2LWW"/>
    </source>
</evidence>
<evidence type="ECO:0007829" key="41">
    <source>
        <dbReference type="PDB" id="4I9O"/>
    </source>
</evidence>
<evidence type="ECO:0007829" key="42">
    <source>
        <dbReference type="PDB" id="5HPD"/>
    </source>
</evidence>
<evidence type="ECO:0007829" key="43">
    <source>
        <dbReference type="PDB" id="5W0I"/>
    </source>
</evidence>
<evidence type="ECO:0007829" key="44">
    <source>
        <dbReference type="PDB" id="7LVS"/>
    </source>
</evidence>
<evidence type="ECO:0007829" key="45">
    <source>
        <dbReference type="PDB" id="8CMZ"/>
    </source>
</evidence>
<evidence type="ECO:0007829" key="46">
    <source>
        <dbReference type="PDB" id="8CNB"/>
    </source>
</evidence>
<evidence type="ECO:0007829" key="47">
    <source>
        <dbReference type="PDB" id="8CND"/>
    </source>
</evidence>
<comment type="function">
    <text evidence="3 10 13 14 19 20 23">Acetylates histones, giving a specific tag for transcriptional activation (PubMed:11115394). Mediates acetylation of histone H3 at 'Lys-18' and 'Lys-27' (H3K18ac and H3K27ac, respectively) (By similarity). Also acetylates non-histone proteins, like DDX21, FBL, IRF2, MAFG, NCOA3, POLR1E/PAF53 and FOXO1 (PubMed:10207073, PubMed:11701890, PubMed:15220471, PubMed:16287980). Binds specifically to phosphorylated CREB and enhances its transcriptional activity toward cAMP-responsive genes (By similarity). Acts as a coactivator of ALX1 (By similarity). Acts as a circadian transcriptional coactivator which enhances the activity of the circadian transcriptional activators: NPAS2-BMAL1 and CLOCK-BMAL1 heterodimers (By similarity). Acetylates PCNA; acetylation promotes removal of chromatin-bound PCNA and its degradation during nucleotide excision repair (NER) (PubMed:24737000). Acetylates POLR1E/PAF53, leading to decreased association of RNA polymerase I with the rDNA promoter region and coding region (By similarity). Acetylates DDX21, thereby inhibiting DDX21 helicase activity (By similarity). Acetylates FBL, preventing methylation of 'Gln-105' of histone H2A (H2AQ104me) (By similarity). In addition to protein acetyltransferase, can use different acyl-CoA substrates, such as lactoyl-CoA, and is able to mediate protein lactylation (By similarity). Catalyzes lactylation of MRE11 in response to DNA damage, thereby promoting DNA double-strand breaks (DSBs) via homologous recombination (HR) (By similarity). Functions as a transcriptional coactivator for SMAD4 in the TGF-beta signaling pathway (By similarity).</text>
</comment>
<comment type="catalytic activity">
    <reaction evidence="13">
        <text>L-lysyl-[histone] + acetyl-CoA = N(6)-acetyl-L-lysyl-[histone] + CoA + H(+)</text>
        <dbReference type="Rhea" id="RHEA:21992"/>
        <dbReference type="Rhea" id="RHEA-COMP:9845"/>
        <dbReference type="Rhea" id="RHEA-COMP:11338"/>
        <dbReference type="ChEBI" id="CHEBI:15378"/>
        <dbReference type="ChEBI" id="CHEBI:29969"/>
        <dbReference type="ChEBI" id="CHEBI:57287"/>
        <dbReference type="ChEBI" id="CHEBI:57288"/>
        <dbReference type="ChEBI" id="CHEBI:61930"/>
        <dbReference type="EC" id="2.3.1.48"/>
    </reaction>
</comment>
<comment type="catalytic activity">
    <reaction evidence="19">
        <text>L-lysyl-[protein] + acetyl-CoA = N(6)-acetyl-L-lysyl-[protein] + CoA + H(+)</text>
        <dbReference type="Rhea" id="RHEA:45948"/>
        <dbReference type="Rhea" id="RHEA-COMP:9752"/>
        <dbReference type="Rhea" id="RHEA-COMP:10731"/>
        <dbReference type="ChEBI" id="CHEBI:15378"/>
        <dbReference type="ChEBI" id="CHEBI:29969"/>
        <dbReference type="ChEBI" id="CHEBI:57287"/>
        <dbReference type="ChEBI" id="CHEBI:57288"/>
        <dbReference type="ChEBI" id="CHEBI:61930"/>
    </reaction>
</comment>
<comment type="catalytic activity">
    <reaction evidence="3">
        <text>(S)-lactoyl-CoA + L-lysyl-[protein] = N(6)-[(S)-lactoyl]-L-lysyl-[protein] + CoA + H(+)</text>
        <dbReference type="Rhea" id="RHEA:61996"/>
        <dbReference type="Rhea" id="RHEA-COMP:9752"/>
        <dbReference type="Rhea" id="RHEA-COMP:19466"/>
        <dbReference type="ChEBI" id="CHEBI:15378"/>
        <dbReference type="ChEBI" id="CHEBI:29969"/>
        <dbReference type="ChEBI" id="CHEBI:57287"/>
        <dbReference type="ChEBI" id="CHEBI:231527"/>
        <dbReference type="ChEBI" id="CHEBI:231528"/>
    </reaction>
    <physiologicalReaction direction="left-to-right" evidence="3">
        <dbReference type="Rhea" id="RHEA:61997"/>
    </physiologicalReaction>
</comment>
<comment type="subunit">
    <text evidence="3 10 11 12 13 14 15 16 17 18 20 21 22 23 24 25 26 27">Part of a complex composed of MSX3, CREBBP/CBP AND EP300/p300; the interaction with MSX3 decreases histone acetylation activity (PubMed:11115394). Interacts with DHX9 (via N-terminus); this interaction mediates association with RNA polymerase II holoenzyme and stimulates CREB-dependent transcriptional activation (By similarity). Interacts (via transactivation domain and C-terminus) with PCNA; the interaction occurs on chromatin in UV-irradiated damaged cells (By similarity). Found in a complex containing NCOA2; NCOA3; IKKA; IKKB and IKBKG. Probably part of a complex with HIF1A and EP300. The TAZ-type 1 domain interacts with HIF1A. Interacts with SRCAP, ELF3, MLLT7/FOXO4, N4BP2, NCOA6, PCAF, PELP1, PML, SMAD1, SMAD2, SMAD3, SPIB and TRERF1. Interacts with KLF1; the interaction results in acetylation and enhancement of transcriptional activity of KLF1. Interacts with MAFG; the interaction acetylates MAFG in the basic region and stimulates NFE2 transcriptional activity through increasing its DNA-binding activity. Interacts with IRF2; the interaction acetylates IRF2 and regulates its activity on the H4 promoter. Interacts with IRF3 (when phosphorylated); forming the dsRNA-activated factor 1 (DRAF1), a complex which activates the transcription of the type I interferon genes (By similarity). Interacts (via N-terminus) with SS18L1/CREST (via C-terminus). Interacts with FOXO1; the interaction acetylates FOXO1 and inhibits its transcriptional activity. Interacts with MECOM and MTDH. Interacts with ASF1A and ASF1B; this promotes histone acetylation. Interacts with acetylated TP53/p53 and with the acetylated histones H3 and H4 (By similarity). Interacts with CITED1 (via C-terminus). Interacts with GATA1; the interaction results in acetylation and enhancement of transcriptional activity of GATA1. Interacts with MAF, CARM1. NCOA3, ZCCHC12, DDX17, DDX5 and CITED4 (C-terminal region). Interacts with phosphorylated CREB1. Interacts with DAXX; the interaction is dependent on CBP sumoylation and results in suppression of the transcriptional activity via recruitment of HDAC2 to DAXX. Interacts with NPAS2, CLOCK and BMAL1. Interacts with SMAD4; negatively regulated by ZBTB7A (By similarity). Forms a complex with KMT2A and CREB1 (By similarity). Interacts with DDX3X; this interaction may facilitate HNF4A acetylation (By similarity). Interacts with MSX1; the interaction may inhibit MSX1 autoinactivation (PubMed:10215616). Interacts with MSX3 (PubMed:10215616). Interacts with ACSS2 (PubMed:28552616).</text>
</comment>
<comment type="interaction">
    <interactant intactId="EBI-296306">
        <id>P45481</id>
    </interactant>
    <interactant intactId="EBI-644568">
        <id>Q9WTL8-4</id>
        <label>Bmal1</label>
    </interactant>
    <organismsDiffer>false</organismsDiffer>
    <experiments>2</experiments>
</comment>
<comment type="interaction">
    <interactant intactId="EBI-296306">
        <id>P45481</id>
    </interactant>
    <interactant intactId="EBI-397872">
        <id>Q02248</id>
        <label>Ctnnb1</label>
    </interactant>
    <organismsDiffer>false</organismsDiffer>
    <experiments>3</experiments>
</comment>
<comment type="interaction">
    <interactant intactId="EBI-296306">
        <id>P45481</id>
    </interactant>
    <interactant intactId="EBI-4289053">
        <id>P27577</id>
        <label>Ets1</label>
    </interactant>
    <organismsDiffer>false</organismsDiffer>
    <experiments>3</experiments>
</comment>
<comment type="interaction">
    <interactant intactId="EBI-296306">
        <id>P45481</id>
    </interactant>
    <interactant intactId="EBI-519077">
        <id>Q60749</id>
        <label>Khdrbs1</label>
    </interactant>
    <organismsDiffer>false</organismsDiffer>
    <experiments>7</experiments>
</comment>
<comment type="interaction">
    <interactant intactId="EBI-296306">
        <id>P45481</id>
    </interactant>
    <interactant intactId="EBI-644400">
        <id>Q04207</id>
        <label>Rela</label>
    </interactant>
    <organismsDiffer>false</organismsDiffer>
    <experiments>10</experiments>
</comment>
<comment type="interaction">
    <interactant intactId="EBI-296306">
        <id>P45481</id>
    </interactant>
    <interactant intactId="EBI-6876996">
        <id>Q62318-1</id>
        <label>Trim28</label>
    </interactant>
    <organismsDiffer>false</organismsDiffer>
    <experiments>2</experiments>
</comment>
<comment type="interaction">
    <interactant intactId="EBI-296306">
        <id>P45481</id>
    </interactant>
    <interactant intactId="EBI-765407">
        <id>P41182</id>
        <label>BCL6</label>
    </interactant>
    <organismsDiffer>true</organismsDiffer>
    <experiments>2</experiments>
</comment>
<comment type="interaction">
    <interactant intactId="EBI-296306">
        <id>P45481</id>
    </interactant>
    <interactant intactId="EBI-1001438">
        <id>O60566</id>
        <label>BUB1B</label>
    </interactant>
    <organismsDiffer>true</organismsDiffer>
    <experiments>3</experiments>
</comment>
<comment type="interaction">
    <interactant intactId="EBI-296306">
        <id>P45481</id>
    </interactant>
    <interactant intactId="EBI-1050386">
        <id>P61201</id>
        <label>COPS2</label>
    </interactant>
    <organismsDiffer>true</organismsDiffer>
    <experiments>2</experiments>
</comment>
<comment type="interaction">
    <interactant intactId="EBI-296306">
        <id>P45481</id>
    </interactant>
    <interactant intactId="EBI-351962">
        <id>P17844</id>
        <label>DDX5</label>
    </interactant>
    <organismsDiffer>true</organismsDiffer>
    <experiments>3</experiments>
</comment>
<comment type="interaction">
    <interactant intactId="EBI-296306">
        <id>P45481</id>
    </interactant>
    <interactant intactId="EBI-400434">
        <id>P35637</id>
        <label>FUS</label>
    </interactant>
    <organismsDiffer>true</organismsDiffer>
    <experiments>4</experiments>
</comment>
<comment type="interaction">
    <interactant intactId="EBI-296306">
        <id>P45481</id>
    </interactant>
    <interactant intactId="EBI-302023">
        <id>P62805</id>
        <label>H4C9</label>
    </interactant>
    <organismsDiffer>true</organismsDiffer>
    <experiments>2</experiments>
</comment>
<comment type="interaction">
    <interactant intactId="EBI-296306">
        <id>P45481</id>
    </interactant>
    <interactant intactId="EBI-591370">
        <id>Q03164</id>
        <label>KMT2A</label>
    </interactant>
    <organismsDiffer>true</organismsDiffer>
    <experiments>7</experiments>
</comment>
<comment type="interaction">
    <interactant intactId="EBI-296306">
        <id>P45481</id>
    </interactant>
    <interactant intactId="EBI-1045459">
        <id>O95863</id>
        <label>SNAI1</label>
    </interactant>
    <organismsDiffer>true</organismsDiffer>
    <experiments>7</experiments>
</comment>
<comment type="interaction">
    <interactant intactId="EBI-296306">
        <id>P45481</id>
    </interactant>
    <interactant intactId="EBI-366083">
        <id>P04637</id>
        <label>TP53</label>
    </interactant>
    <organismsDiffer>true</organismsDiffer>
    <experiments>10</experiments>
</comment>
<comment type="interaction">
    <interactant intactId="EBI-296306">
        <id>P45481</id>
    </interactant>
    <interactant intactId="EBI-8599077">
        <id>P03254</id>
    </interactant>
    <organismsDiffer>true</organismsDiffer>
    <experiments>3</experiments>
</comment>
<comment type="interaction">
    <interactant intactId="EBI-296306">
        <id>P45481</id>
    </interactant>
    <interactant intactId="EBI-2603114">
        <id>P03255</id>
    </interactant>
    <organismsDiffer>true</organismsDiffer>
    <experiments>2</experiments>
</comment>
<comment type="interaction">
    <interactant intactId="EBI-296306">
        <id>P45481</id>
    </interactant>
    <interactant intactId="EBI-936023">
        <id>P88946</id>
    </interactant>
    <organismsDiffer>true</organismsDiffer>
    <experiments>6</experiments>
</comment>
<comment type="subcellular location">
    <subcellularLocation>
        <location evidence="3">Cytoplasm</location>
    </subcellularLocation>
    <subcellularLocation>
        <location evidence="3">Nucleus</location>
    </subcellularLocation>
    <text evidence="3">Recruited to nuclear bodies by SS18L1/CREST. In the presence of ALX1 relocalizes from the cytoplasm to the nucleus. Relocalizes from the nucleus to the cytoplasm following UV cell damage (By similarity).</text>
</comment>
<comment type="PTM">
    <text evidence="14">Methylation of the KIX domain by CARM1 blocks association with CREB. This results in the blockade of CREB signaling, and in activation of apoptotic response.</text>
</comment>
<comment type="PTM">
    <text evidence="3">Phosphorylated by CHUK/IKKA at Ser-1383 and Ser-1387; these phosphorylations promote cell growth by switching the binding preference of CREBBP from TP53 to NF-kappa-B.</text>
</comment>
<comment type="PTM">
    <text evidence="20">Sumoylation negatively regulates transcriptional activity via the recruitment of DAAX.</text>
</comment>
<comment type="PTM">
    <text evidence="3">Autoacetylation is required for binding to protein substrates, such as acetylated histones and acetylated TP53/p53. Autoacetylation is induced by glucose and fatty acids.</text>
</comment>
<name>CBP_MOUSE</name>
<proteinExistence type="evidence at protein level"/>